<comment type="function">
    <text evidence="2 7 8 15 18 24 25 29 33 34">E3 ubiquitin-protein ligase which accepts ubiquitin from an E2 ubiquitin-conjugating enzyme in the form of a thioester and then directly transfers the ubiquitin to targeted substrates. Specifically ubiquitinates 'Lys-63' in target proteins (PubMed:19920177, PubMed:21399620, PubMed:23644597). Involved in the pathway leading to the degradation of VEGFR-2/KDFR, independently of its ubiquitin-ligase activity. Monoubiquitinates IGF1R at multiple sites, thus leading to receptor internalization and degradation in lysosomes (By similarity). Ubiquitinates FGFR1, leading to receptor internalization and degradation in lysosomes (PubMed:21765395). Promotes ubiquitination of RAPGEF2 (PubMed:11598133). According to PubMed:18562292 the direct link between NEDD4 and PTEN regulation through polyubiquitination described in PubMed:17218260 is questionable. Involved in ubiquitination of ERBB4 intracellular domain E4ICD (By similarity). Part of a signaling complex composed of NEDD4, RAP2A and TNIK which regulates neuronal dendrite extension and arborization during development (By similarity). Ubiquitinates TNK2 and regulates EGF-induced degradation of EGFR and TNF2 (PubMed:20086093). Ubiquitinates BRAT1 and this ubiquitination is enhanced in the presence of NDFIP1 (PubMed:25631046). Ubiquitinates DAZAP2, leading to its proteasomal degradation (PubMed:11342538). Ubiquitinates POLR2A (PubMed:19920177). Functions as a platform to recruit USP13 to form an NEDD4-USP13 deubiquitination complex that plays a critical role in cleaving the 'Lys-48'-linked ubiquitin chains of VPS34 and then stabilizing VPS34, thus promoting the formation of autophagosomes (PubMed:32101753).</text>
</comment>
<comment type="function">
    <text evidence="9 16">(Microbial infection) Involved in the ubiquitination of Ebola virus protein VP40 which plays a role in viral budding.</text>
</comment>
<comment type="catalytic activity">
    <reaction evidence="7 15 24 44">
        <text>S-ubiquitinyl-[E2 ubiquitin-conjugating enzyme]-L-cysteine + [acceptor protein]-L-lysine = [E2 ubiquitin-conjugating enzyme]-L-cysteine + N(6)-ubiquitinyl-[acceptor protein]-L-lysine.</text>
        <dbReference type="EC" id="2.3.2.26"/>
    </reaction>
</comment>
<comment type="activity regulation">
    <text evidence="1">Activated by NDFIP1- and NDFIP2-binding.</text>
</comment>
<comment type="pathway">
    <text evidence="29">Protein modification; protein ubiquitination.</text>
</comment>
<comment type="subunit">
    <text evidence="1 2 7 8 15 16 18 20 21 22 23 24 25 26 27 28 30 31 32 34">Binds, in vitro, through the WW2 and WW3 domains, to neural isoforms of ENAH that contain the PPSY motif. Interacts with BEAN1, LITAF, RNF11, WBP1, WBP2, PMEPAI and PRRG2 (By similarity). Interacts with NDFIP1 and NDFIP2; this interaction activates the E3 ubiquitin-protein ligase and may induce its recruitment to exosomes (By similarity). Interacts with UBE2D2 (By similarity). Interaction with PTEN is questionable according to PubMed:18562292. Interacts (via C2 domain) with GRB10 (via SH2 domain). Interacts with ERBB4 (By similarity). Interacts with TNIK; the interaction is direct, allows the TNIK-dependent recruitment of RAP2A and its ubiquitination by NEDD4. Interacts (via WW3 domain) with TNK2; EGF promotes this interaction. Interacts (via WW3 domain) with FGFR1 (via C-terminus). Interacts with OTUD7B. Interacts with ISG15. Interacts (via WW domain) with RAPGEF2; this interaction leads to ubiquitination and degradation via the proteasome pathway. Interacts (via WW domains) with ARRDC3 (via PPXY motifs) (PubMed:20559325, PubMed:24379409). Interacts with LAPTM4B; may play a role in the lysosomal sorting of LAPTM4B (PubMed:22096579). Interacts (via WW domains) with ARRDC1, ARRDC2 and ARRDC3 (PubMed:21191027). Interacts with ZBTB7B (By similarity). Interacts with PRRG4 (via cytoplasmic domain) (PubMed:23873930). Interacts directly with LDLRAD3; this interaction promotes NEDD4 auto-ubiquitination. Interacts with ADRB2 (PubMed:23166351). Interacts (via WW domains) with DAZAP2 (via PPAY motif) (PubMed:11342538). Interacts with USP13 (PubMed:32101753).</text>
</comment>
<comment type="subunit">
    <text evidence="9 10 17">(Microbial infection) Interacts with viral proteins that contain a late-budding motif P-P-P-Y. This interaction is essential for viral particle budding of many retroviruses, like HTLV-1 Gag and MLV Gag. Interacts with Herpes simplex virus 2 (HHV-2) protein UL56; this interaction induces NEDD4 degradation (PubMed:18353951). Interacts with Ebola virus protein VP40 (PubMed:12559917).</text>
</comment>
<comment type="interaction">
    <interactant intactId="EBI-726944">
        <id>P46934</id>
    </interactant>
    <interactant intactId="EBI-2875665">
        <id>Q96B67</id>
        <label>ARRDC3</label>
    </interactant>
    <organismsDiffer>false</organismsDiffer>
    <experiments>4</experiments>
</comment>
<comment type="interaction">
    <interactant intactId="EBI-726944">
        <id>P46934</id>
    </interactant>
    <interactant intactId="EBI-297353">
        <id>P00533</id>
        <label>EGFR</label>
    </interactant>
    <organismsDiffer>false</organismsDiffer>
    <experiments>3</experiments>
</comment>
<comment type="interaction">
    <interactant intactId="EBI-726944">
        <id>P46934</id>
    </interactant>
    <interactant intactId="EBI-8636612">
        <id>Q15884</id>
        <label>ENTREP1</label>
    </interactant>
    <organismsDiffer>false</organismsDiffer>
    <experiments>4</experiments>
</comment>
<comment type="interaction">
    <interactant intactId="EBI-726944">
        <id>P46934</id>
    </interactant>
    <interactant intactId="EBI-1028277">
        <id>P11362</id>
        <label>FGFR1</label>
    </interactant>
    <organismsDiffer>false</organismsDiffer>
    <experiments>26</experiments>
</comment>
<comment type="interaction">
    <interactant intactId="EBI-726944">
        <id>P46934</id>
    </interactant>
    <interactant intactId="EBI-712001">
        <id>O95166</id>
        <label>GABARAP</label>
    </interactant>
    <organismsDiffer>false</organismsDiffer>
    <experiments>6</experiments>
</comment>
<comment type="interaction">
    <interactant intactId="EBI-726944">
        <id>P46934</id>
    </interactant>
    <interactant intactId="EBI-746969">
        <id>Q9H0R8</id>
        <label>GABARAPL1</label>
    </interactant>
    <organismsDiffer>false</organismsDiffer>
    <experiments>6</experiments>
</comment>
<comment type="interaction">
    <interactant intactId="EBI-726944">
        <id>P46934</id>
    </interactant>
    <interactant intactId="EBI-720116">
        <id>P60520</id>
        <label>GABARAPL2</label>
    </interactant>
    <organismsDiffer>false</organismsDiffer>
    <experiments>6</experiments>
</comment>
<comment type="interaction">
    <interactant intactId="EBI-726944">
        <id>P46934</id>
    </interactant>
    <interactant intactId="EBI-9680883">
        <id>O15165</id>
        <label>LDLRAD4</label>
    </interactant>
    <organismsDiffer>false</organismsDiffer>
    <experiments>4</experiments>
</comment>
<comment type="interaction">
    <interactant intactId="EBI-726944">
        <id>P46934</id>
    </interactant>
    <interactant intactId="EBI-725647">
        <id>Q99732</id>
        <label>LITAF</label>
    </interactant>
    <organismsDiffer>false</organismsDiffer>
    <experiments>7</experiments>
</comment>
<comment type="interaction">
    <interactant intactId="EBI-726944">
        <id>P46934</id>
    </interactant>
    <interactant intactId="EBI-373144">
        <id>Q9GZQ8</id>
        <label>MAP1LC3B</label>
    </interactant>
    <organismsDiffer>false</organismsDiffer>
    <experiments>2</experiments>
</comment>
<comment type="interaction">
    <interactant intactId="EBI-726944">
        <id>P46934</id>
    </interactant>
    <interactant intactId="EBI-2509726">
        <id>Q16655</id>
        <label>MLANA</label>
    </interactant>
    <organismsDiffer>false</organismsDiffer>
    <experiments>2</experiments>
</comment>
<comment type="interaction">
    <interactant intactId="EBI-726944">
        <id>P46934</id>
    </interactant>
    <interactant intactId="EBI-30833901">
        <id>Q96PG2</id>
        <label>MS4A10</label>
    </interactant>
    <organismsDiffer>false</organismsDiffer>
    <experiments>2</experiments>
</comment>
<comment type="interaction">
    <interactant intactId="EBI-726944">
        <id>P46934</id>
    </interactant>
    <interactant intactId="EBI-2820617">
        <id>Q8N4L2</id>
        <label>PIP4P2</label>
    </interactant>
    <organismsDiffer>false</organismsDiffer>
    <experiments>2</experiments>
</comment>
<comment type="interaction">
    <interactant intactId="EBI-726944">
        <id>P46934</id>
    </interactant>
    <interactant intactId="EBI-3925410">
        <id>Q8TB68</id>
        <label>PRR7</label>
    </interactant>
    <organismsDiffer>false</organismsDiffer>
    <experiments>2</experiments>
</comment>
<comment type="interaction">
    <interactant intactId="EBI-726944">
        <id>P46934</id>
    </interactant>
    <interactant intactId="EBI-3918643">
        <id>Q9BZD6</id>
        <label>PRRG4</label>
    </interactant>
    <organismsDiffer>false</organismsDiffer>
    <experiments>5</experiments>
</comment>
<comment type="interaction">
    <interactant intactId="EBI-726944">
        <id>P46934</id>
    </interactant>
    <interactant intactId="EBI-696162">
        <id>P60484</id>
        <label>PTEN</label>
    </interactant>
    <organismsDiffer>false</organismsDiffer>
    <experiments>4</experiments>
</comment>
<comment type="interaction">
    <interactant intactId="EBI-726944">
        <id>P46934</id>
    </interactant>
    <interactant intactId="EBI-396669">
        <id>Q9Y3C5</id>
        <label>RNF11</label>
    </interactant>
    <organismsDiffer>false</organismsDiffer>
    <experiments>7</experiments>
</comment>
<comment type="interaction">
    <interactant intactId="EBI-726944">
        <id>P46934</id>
    </interactant>
    <interactant intactId="EBI-7845444">
        <id>P37088</id>
        <label>SCNN1A</label>
    </interactant>
    <organismsDiffer>false</organismsDiffer>
    <experiments>3</experiments>
</comment>
<comment type="interaction">
    <interactant intactId="EBI-726944">
        <id>P46934</id>
    </interactant>
    <interactant intactId="EBI-2547187">
        <id>P51168</id>
        <label>SCNN1B</label>
    </interactant>
    <organismsDiffer>false</organismsDiffer>
    <experiments>7</experiments>
</comment>
<comment type="interaction">
    <interactant intactId="EBI-726944">
        <id>P46934</id>
    </interactant>
    <interactant intactId="EBI-726044">
        <id>Q9NW97</id>
        <label>TMEM51</label>
    </interactant>
    <organismsDiffer>false</organismsDiffer>
    <experiments>3</experiments>
</comment>
<comment type="interaction">
    <interactant intactId="EBI-726944">
        <id>P46934</id>
    </interactant>
    <interactant intactId="EBI-389606">
        <id>O15350</id>
        <label>TP73</label>
    </interactant>
    <organismsDiffer>false</organismsDiffer>
    <experiments>2</experiments>
</comment>
<comment type="interaction">
    <interactant intactId="EBI-726944">
        <id>P46934</id>
    </interactant>
    <interactant intactId="EBI-3505166">
        <id>Q96PN7</id>
        <label>TRERF1</label>
    </interactant>
    <organismsDiffer>false</organismsDiffer>
    <experiments>2</experiments>
</comment>
<comment type="interaction">
    <interactant intactId="EBI-726944">
        <id>P46934</id>
    </interactant>
    <interactant intactId="EBI-413034">
        <id>P0CG47</id>
        <label>UBB</label>
    </interactant>
    <organismsDiffer>false</organismsDiffer>
    <experiments>2</experiments>
</comment>
<comment type="interaction">
    <interactant intactId="EBI-726944">
        <id>P46934</id>
    </interactant>
    <interactant intactId="EBI-2952704">
        <id>Q9P2Y5</id>
        <label>UVRAG</label>
    </interactant>
    <organismsDiffer>false</organismsDiffer>
    <experiments>2</experiments>
</comment>
<comment type="interaction">
    <interactant intactId="EBI-726944">
        <id>P46934</id>
    </interactant>
    <interactant intactId="EBI-356498">
        <id>P62258</id>
        <label>YWHAE</label>
    </interactant>
    <organismsDiffer>false</organismsDiffer>
    <experiments>3</experiments>
</comment>
<comment type="interaction">
    <interactant intactId="EBI-726944">
        <id>P46934</id>
    </interactant>
    <interactant intactId="EBI-38291610">
        <id>P28282</id>
        <label>UL56</label>
    </interactant>
    <organismsDiffer>true</organismsDiffer>
    <experiments>8</experiments>
</comment>
<comment type="interaction">
    <interactant intactId="EBI-726944">
        <id>P46934</id>
    </interactant>
    <interactant intactId="EBI-38773572">
        <id>Q5XX06</id>
        <label>VP40</label>
    </interactant>
    <organismsDiffer>true</organismsDiffer>
    <experiments>3</experiments>
</comment>
<comment type="interaction">
    <interactant intactId="EBI-11980721">
        <id>P46934-3</id>
    </interactant>
    <interactant intactId="EBI-746969">
        <id>Q9H0R8</id>
        <label>GABARAPL1</label>
    </interactant>
    <organismsDiffer>false</organismsDiffer>
    <experiments>3</experiments>
</comment>
<comment type="interaction">
    <interactant intactId="EBI-11980721">
        <id>P46934-3</id>
    </interactant>
    <interactant intactId="EBI-720116">
        <id>P60520</id>
        <label>GABARAPL2</label>
    </interactant>
    <organismsDiffer>false</organismsDiffer>
    <experiments>3</experiments>
</comment>
<comment type="interaction">
    <interactant intactId="EBI-11980721">
        <id>P46934-3</id>
    </interactant>
    <interactant intactId="EBI-7950783">
        <id>Q96JP2</id>
        <label>MYO15B</label>
    </interactant>
    <organismsDiffer>false</organismsDiffer>
    <experiments>3</experiments>
</comment>
<comment type="interaction">
    <interactant intactId="EBI-11980721">
        <id>P46934-3</id>
    </interactant>
    <interactant intactId="EBI-1055079">
        <id>O15160</id>
        <label>POLR1C</label>
    </interactant>
    <organismsDiffer>false</organismsDiffer>
    <experiments>3</experiments>
</comment>
<comment type="interaction">
    <interactant intactId="EBI-11980721">
        <id>P46934-3</id>
    </interactant>
    <interactant intactId="EBI-12037847">
        <id>Q6ZSJ9</id>
        <label>SHISA6</label>
    </interactant>
    <organismsDiffer>false</organismsDiffer>
    <experiments>3</experiments>
</comment>
<comment type="interaction">
    <interactant intactId="EBI-11980721">
        <id>P46934-3</id>
    </interactant>
    <interactant intactId="EBI-347161">
        <id>P84022</id>
        <label>SMAD3</label>
    </interactant>
    <organismsDiffer>false</organismsDiffer>
    <experiments>3</experiments>
</comment>
<comment type="interaction">
    <interactant intactId="EBI-11980721">
        <id>P46934-3</id>
    </interactant>
    <interactant intactId="EBI-11952721">
        <id>Q05BL1</id>
        <label>TP53BP2</label>
    </interactant>
    <organismsDiffer>false</organismsDiffer>
    <experiments>3</experiments>
</comment>
<comment type="interaction">
    <interactant intactId="EBI-11980721">
        <id>P46934-3</id>
    </interactant>
    <interactant intactId="EBI-25474821">
        <id>P0DTC2</id>
        <label>S</label>
    </interactant>
    <organismsDiffer>true</organismsDiffer>
    <experiments>2</experiments>
</comment>
<comment type="interaction">
    <interactant intactId="EBI-16129814">
        <id>P46934-4</id>
    </interactant>
    <interactant intactId="EBI-396727">
        <id>Q9HAU4</id>
        <label>SMURF2</label>
    </interactant>
    <organismsDiffer>false</organismsDiffer>
    <experiments>2</experiments>
</comment>
<comment type="interaction">
    <interactant intactId="EBI-16129814">
        <id>P46934-4</id>
    </interactant>
    <interactant intactId="EBI-413053">
        <id>P62990</id>
        <label>UBC</label>
    </interactant>
    <organismsDiffer>true</organismsDiffer>
    <experiments>2</experiments>
</comment>
<comment type="subcellular location">
    <subcellularLocation>
        <location evidence="7">Cytoplasm</location>
    </subcellularLocation>
    <subcellularLocation>
        <location evidence="7">Nucleus</location>
    </subcellularLocation>
    <subcellularLocation>
        <location evidence="2">Cell membrane</location>
        <topology evidence="2">Peripheral membrane protein</topology>
    </subcellularLocation>
    <text evidence="2 7 19">Predominantly cytoplasmic but also located in the nucleus (PubMed:11342538). Recruited to the plasma membrane by GRB10. Once complexed with GRB10 and IGF1R, follows IGF1R internalization, remaining associated with early endosomes. Uncouples from IGF1R-containing endosomes before the sorting of the receptor to the lysosomal compartment (By similarity). May be recruited to exosomes by NDFIP1 (PubMed:18819914).</text>
</comment>
<comment type="alternative products">
    <event type="alternative splicing"/>
    <isoform>
        <id>P46934-1</id>
        <name>1</name>
        <sequence type="displayed"/>
    </isoform>
    <isoform>
        <id>P46934-2</id>
        <name>2</name>
        <sequence type="described" ref="VSP_038259"/>
    </isoform>
    <isoform>
        <id>P46934-3</id>
        <name>3</name>
        <sequence type="described" ref="VSP_038258"/>
    </isoform>
    <isoform>
        <id>P46934-4</id>
        <name>4</name>
        <sequence type="described" ref="VSP_038256 VSP_038257"/>
    </isoform>
</comment>
<comment type="domain">
    <text evidence="2 23 30">WW domains are involved in recognizing PPxY motifs in substrate proteins (PubMed:21191027, PubMed:23665454, PubMed:24379409). The WW domains mediate interaction with LITAF, RNF11, WBP1, WBP2, PMEPAI, NDFIP1 and PRRG2 (By similarity).</text>
</comment>
<comment type="PTM">
    <text evidence="34">Undergoes 'Lys-29'-linked auto-ubiquitination at Lys-1279 and serves as a scaffold for recruiting USP13 to form an NEDD4-USP13 deubiquitination complex.</text>
</comment>
<comment type="miscellaneous">
    <text>A cysteine residue is required for ubiquitin-thioester formation.</text>
</comment>
<comment type="sequence caution" evidence="43">
    <conflict type="erroneous initiation">
        <sequence resource="EMBL-CDS" id="BAA07655"/>
    </conflict>
    <text>Extended N-terminus.</text>
</comment>
<evidence type="ECO:0000250" key="1"/>
<evidence type="ECO:0000250" key="2">
    <source>
        <dbReference type="UniProtKB" id="P46935"/>
    </source>
</evidence>
<evidence type="ECO:0000250" key="3">
    <source>
        <dbReference type="UniProtKB" id="Q62940"/>
    </source>
</evidence>
<evidence type="ECO:0000255" key="4">
    <source>
        <dbReference type="PROSITE-ProRule" id="PRU00104"/>
    </source>
</evidence>
<evidence type="ECO:0000255" key="5">
    <source>
        <dbReference type="PROSITE-ProRule" id="PRU00224"/>
    </source>
</evidence>
<evidence type="ECO:0000256" key="6">
    <source>
        <dbReference type="SAM" id="MobiDB-lite"/>
    </source>
</evidence>
<evidence type="ECO:0000269" key="7">
    <source>
    </source>
</evidence>
<evidence type="ECO:0000269" key="8">
    <source>
    </source>
</evidence>
<evidence type="ECO:0000269" key="9">
    <source>
    </source>
</evidence>
<evidence type="ECO:0000269" key="10">
    <source>
    </source>
</evidence>
<evidence type="ECO:0000269" key="11">
    <source>
    </source>
</evidence>
<evidence type="ECO:0000269" key="12">
    <source>
    </source>
</evidence>
<evidence type="ECO:0000269" key="13">
    <source>
    </source>
</evidence>
<evidence type="ECO:0000269" key="14">
    <source>
    </source>
</evidence>
<evidence type="ECO:0000269" key="15">
    <source>
    </source>
</evidence>
<evidence type="ECO:0000269" key="16">
    <source>
    </source>
</evidence>
<evidence type="ECO:0000269" key="17">
    <source>
    </source>
</evidence>
<evidence type="ECO:0000269" key="18">
    <source>
    </source>
</evidence>
<evidence type="ECO:0000269" key="19">
    <source>
    </source>
</evidence>
<evidence type="ECO:0000269" key="20">
    <source>
    </source>
</evidence>
<evidence type="ECO:0000269" key="21">
    <source>
    </source>
</evidence>
<evidence type="ECO:0000269" key="22">
    <source>
    </source>
</evidence>
<evidence type="ECO:0000269" key="23">
    <source>
    </source>
</evidence>
<evidence type="ECO:0000269" key="24">
    <source>
    </source>
</evidence>
<evidence type="ECO:0000269" key="25">
    <source>
    </source>
</evidence>
<evidence type="ECO:0000269" key="26">
    <source>
    </source>
</evidence>
<evidence type="ECO:0000269" key="27">
    <source>
    </source>
</evidence>
<evidence type="ECO:0000269" key="28">
    <source>
    </source>
</evidence>
<evidence type="ECO:0000269" key="29">
    <source>
    </source>
</evidence>
<evidence type="ECO:0000269" key="30">
    <source>
    </source>
</evidence>
<evidence type="ECO:0000269" key="31">
    <source>
    </source>
</evidence>
<evidence type="ECO:0000269" key="32">
    <source>
    </source>
</evidence>
<evidence type="ECO:0000269" key="33">
    <source>
    </source>
</evidence>
<evidence type="ECO:0000269" key="34">
    <source>
    </source>
</evidence>
<evidence type="ECO:0000269" key="35">
    <source>
    </source>
</evidence>
<evidence type="ECO:0000269" key="36">
    <source ref="4"/>
</evidence>
<evidence type="ECO:0000303" key="37">
    <source>
    </source>
</evidence>
<evidence type="ECO:0000303" key="38">
    <source>
    </source>
</evidence>
<evidence type="ECO:0000303" key="39">
    <source>
    </source>
</evidence>
<evidence type="ECO:0000303" key="40">
    <source>
    </source>
</evidence>
<evidence type="ECO:0000303" key="41">
    <source>
    </source>
</evidence>
<evidence type="ECO:0000303" key="42">
    <source ref="4"/>
</evidence>
<evidence type="ECO:0000305" key="43"/>
<evidence type="ECO:0000305" key="44">
    <source>
    </source>
</evidence>
<evidence type="ECO:0007744" key="45">
    <source>
    </source>
</evidence>
<evidence type="ECO:0007744" key="46">
    <source>
    </source>
</evidence>
<evidence type="ECO:0007744" key="47">
    <source>
    </source>
</evidence>
<evidence type="ECO:0007744" key="48">
    <source>
    </source>
</evidence>
<evidence type="ECO:0007829" key="49">
    <source>
        <dbReference type="PDB" id="2KQ0"/>
    </source>
</evidence>
<evidence type="ECO:0007829" key="50">
    <source>
        <dbReference type="PDB" id="2XBB"/>
    </source>
</evidence>
<evidence type="ECO:0007829" key="51">
    <source>
        <dbReference type="PDB" id="2XBF"/>
    </source>
</evidence>
<evidence type="ECO:0007829" key="52">
    <source>
        <dbReference type="PDB" id="3B7Y"/>
    </source>
</evidence>
<evidence type="ECO:0007829" key="53">
    <source>
        <dbReference type="PDB" id="4N7F"/>
    </source>
</evidence>
<evidence type="ECO:0007829" key="54">
    <source>
        <dbReference type="PDB" id="5AHT"/>
    </source>
</evidence>
<evidence type="ECO:0007829" key="55">
    <source>
        <dbReference type="PDB" id="5C91"/>
    </source>
</evidence>
<gene>
    <name type="primary">NEDD4</name>
    <name type="synonym">KIAA0093</name>
    <name type="synonym">NEDD4-1</name>
    <name evidence="37" type="synonym">RPF1</name>
    <name type="ORF">PIG53</name>
</gene>
<protein>
    <recommendedName>
        <fullName>E3 ubiquitin-protein ligase NEDD4</fullName>
        <ecNumber evidence="7 15 24 44">2.3.2.26</ecNumber>
    </recommendedName>
    <alternativeName>
        <fullName>Cell proliferation-inducing gene 53 protein</fullName>
    </alternativeName>
    <alternativeName>
        <fullName>HECT-type E3 ubiquitin transferase NEDD4</fullName>
    </alternativeName>
    <alternativeName>
        <fullName>Neural precursor cell expressed developmentally down-regulated protein 4</fullName>
        <shortName>NEDD-4</shortName>
    </alternativeName>
</protein>
<organism>
    <name type="scientific">Homo sapiens</name>
    <name type="common">Human</name>
    <dbReference type="NCBI Taxonomy" id="9606"/>
    <lineage>
        <taxon>Eukaryota</taxon>
        <taxon>Metazoa</taxon>
        <taxon>Chordata</taxon>
        <taxon>Craniata</taxon>
        <taxon>Vertebrata</taxon>
        <taxon>Euteleostomi</taxon>
        <taxon>Mammalia</taxon>
        <taxon>Eutheria</taxon>
        <taxon>Euarchontoglires</taxon>
        <taxon>Primates</taxon>
        <taxon>Haplorrhini</taxon>
        <taxon>Catarrhini</taxon>
        <taxon>Hominidae</taxon>
        <taxon>Homo</taxon>
    </lineage>
</organism>
<dbReference type="EC" id="2.3.2.26" evidence="7 15 24 44"/>
<dbReference type="EMBL" id="D42055">
    <property type="protein sequence ID" value="BAA07655.1"/>
    <property type="status" value="ALT_INIT"/>
    <property type="molecule type" value="mRNA"/>
</dbReference>
<dbReference type="EMBL" id="AK304394">
    <property type="protein sequence ID" value="BAG65229.1"/>
    <property type="molecule type" value="mRNA"/>
</dbReference>
<dbReference type="EMBL" id="AY550969">
    <property type="protein sequence ID" value="AAT52215.1"/>
    <property type="molecule type" value="mRNA"/>
</dbReference>
<dbReference type="EMBL" id="AL832063">
    <property type="status" value="NOT_ANNOTATED_CDS"/>
    <property type="molecule type" value="Genomic_DNA"/>
</dbReference>
<dbReference type="EMBL" id="AC009997">
    <property type="status" value="NOT_ANNOTATED_CDS"/>
    <property type="molecule type" value="Genomic_DNA"/>
</dbReference>
<dbReference type="EMBL" id="AC039057">
    <property type="status" value="NOT_ANNOTATED_CDS"/>
    <property type="molecule type" value="Genomic_DNA"/>
</dbReference>
<dbReference type="EMBL" id="CH471082">
    <property type="protein sequence ID" value="EAW77495.1"/>
    <property type="molecule type" value="Genomic_DNA"/>
</dbReference>
<dbReference type="EMBL" id="BC136605">
    <property type="protein sequence ID" value="AAI36606.1"/>
    <property type="molecule type" value="mRNA"/>
</dbReference>
<dbReference type="EMBL" id="BC144284">
    <property type="protein sequence ID" value="AAI44285.1"/>
    <property type="molecule type" value="mRNA"/>
</dbReference>
<dbReference type="EMBL" id="BC144285">
    <property type="protein sequence ID" value="AAI44286.1"/>
    <property type="molecule type" value="mRNA"/>
</dbReference>
<dbReference type="EMBL" id="BC152452">
    <property type="protein sequence ID" value="AAI52453.1"/>
    <property type="molecule type" value="mRNA"/>
</dbReference>
<dbReference type="EMBL" id="BC152562">
    <property type="protein sequence ID" value="AAI52563.1"/>
    <property type="molecule type" value="mRNA"/>
</dbReference>
<dbReference type="CCDS" id="CCDS10156.1">
    <molecule id="P46934-3"/>
</dbReference>
<dbReference type="CCDS" id="CCDS45265.1">
    <molecule id="P46934-4"/>
</dbReference>
<dbReference type="CCDS" id="CCDS61643.1">
    <molecule id="P46934-2"/>
</dbReference>
<dbReference type="CCDS" id="CCDS61644.1">
    <molecule id="P46934-1"/>
</dbReference>
<dbReference type="RefSeq" id="NP_001271267.1">
    <molecule id="P46934-1"/>
    <property type="nucleotide sequence ID" value="NM_001284338.2"/>
</dbReference>
<dbReference type="RefSeq" id="NP_001271268.1">
    <molecule id="P46934-2"/>
    <property type="nucleotide sequence ID" value="NM_001284339.1"/>
</dbReference>
<dbReference type="RefSeq" id="NP_001271269.1">
    <property type="nucleotide sequence ID" value="NM_001284340.1"/>
</dbReference>
<dbReference type="RefSeq" id="NP_001316141.1">
    <property type="nucleotide sequence ID" value="NM_001329212.1"/>
</dbReference>
<dbReference type="RefSeq" id="NP_006145.2">
    <molecule id="P46934-4"/>
    <property type="nucleotide sequence ID" value="NM_006154.4"/>
</dbReference>
<dbReference type="RefSeq" id="NP_940682.2">
    <molecule id="P46934-3"/>
    <property type="nucleotide sequence ID" value="NM_198400.3"/>
</dbReference>
<dbReference type="PDB" id="2KPZ">
    <property type="method" value="NMR"/>
    <property type="chains" value="A=834-878"/>
</dbReference>
<dbReference type="PDB" id="2KQ0">
    <property type="method" value="NMR"/>
    <property type="chains" value="A=834-878"/>
</dbReference>
<dbReference type="PDB" id="2M3O">
    <property type="method" value="NMR"/>
    <property type="chains" value="W=838-877"/>
</dbReference>
<dbReference type="PDB" id="2XBB">
    <property type="method" value="X-ray"/>
    <property type="resolution" value="2.68 A"/>
    <property type="chains" value="A/B=938-1319"/>
</dbReference>
<dbReference type="PDB" id="2XBF">
    <property type="method" value="X-ray"/>
    <property type="resolution" value="2.50 A"/>
    <property type="chains" value="A=938-1319"/>
</dbReference>
<dbReference type="PDB" id="3B7Y">
    <property type="method" value="X-ray"/>
    <property type="resolution" value="1.80 A"/>
    <property type="chains" value="A/B=517-571"/>
</dbReference>
<dbReference type="PDB" id="4BBN">
    <property type="method" value="X-ray"/>
    <property type="resolution" value="2.51 A"/>
    <property type="chains" value="A=938-1319"/>
</dbReference>
<dbReference type="PDB" id="4BE8">
    <property type="method" value="X-ray"/>
    <property type="resolution" value="3.00 A"/>
    <property type="chains" value="A=938-1319"/>
</dbReference>
<dbReference type="PDB" id="4N7F">
    <property type="method" value="X-ray"/>
    <property type="resolution" value="1.10 A"/>
    <property type="chains" value="A/B=841-874"/>
</dbReference>
<dbReference type="PDB" id="4N7H">
    <property type="method" value="X-ray"/>
    <property type="resolution" value="1.70 A"/>
    <property type="chains" value="A=840-872"/>
</dbReference>
<dbReference type="PDB" id="5AHT">
    <property type="method" value="NMR"/>
    <property type="chains" value="A=838-877"/>
</dbReference>
<dbReference type="PDB" id="5C7J">
    <property type="method" value="X-ray"/>
    <property type="resolution" value="3.00 A"/>
    <property type="chains" value="A/B=939-1319"/>
</dbReference>
<dbReference type="PDB" id="5C91">
    <property type="method" value="X-ray"/>
    <property type="resolution" value="2.44 A"/>
    <property type="chains" value="A=938-1312"/>
</dbReference>
<dbReference type="PDBsum" id="2KPZ"/>
<dbReference type="PDBsum" id="2KQ0"/>
<dbReference type="PDBsum" id="2M3O"/>
<dbReference type="PDBsum" id="2XBB"/>
<dbReference type="PDBsum" id="2XBF"/>
<dbReference type="PDBsum" id="3B7Y"/>
<dbReference type="PDBsum" id="4BBN"/>
<dbReference type="PDBsum" id="4BE8"/>
<dbReference type="PDBsum" id="4N7F"/>
<dbReference type="PDBsum" id="4N7H"/>
<dbReference type="PDBsum" id="5AHT"/>
<dbReference type="PDBsum" id="5C7J"/>
<dbReference type="PDBsum" id="5C91"/>
<dbReference type="SMR" id="P46934"/>
<dbReference type="BioGRID" id="110811">
    <property type="interactions" value="595"/>
</dbReference>
<dbReference type="CORUM" id="P46934"/>
<dbReference type="DIP" id="DIP-29815N"/>
<dbReference type="ELM" id="P46934"/>
<dbReference type="FunCoup" id="P46934">
    <property type="interactions" value="2078"/>
</dbReference>
<dbReference type="IntAct" id="P46934">
    <property type="interactions" value="200"/>
</dbReference>
<dbReference type="MINT" id="P46934"/>
<dbReference type="STRING" id="9606.ENSP00000424827"/>
<dbReference type="ChEMBL" id="CHEMBL3621023"/>
<dbReference type="TCDB" id="8.A.30.1.2">
    <property type="family name" value="the nedd4-family interacting protein-2 (nedd4) family"/>
</dbReference>
<dbReference type="GlyGen" id="P46934">
    <property type="glycosylation" value="4 sites, 2 N-linked glycans (2 sites), 1 O-linked glycan (2 sites)"/>
</dbReference>
<dbReference type="iPTMnet" id="P46934"/>
<dbReference type="PhosphoSitePlus" id="P46934"/>
<dbReference type="SwissPalm" id="P46934"/>
<dbReference type="BioMuta" id="NEDD4"/>
<dbReference type="DMDM" id="313104311"/>
<dbReference type="jPOST" id="P46934"/>
<dbReference type="MassIVE" id="P46934"/>
<dbReference type="PaxDb" id="9606-ENSP00000424827"/>
<dbReference type="PeptideAtlas" id="P46934"/>
<dbReference type="ProteomicsDB" id="55768">
    <molecule id="P46934-1"/>
</dbReference>
<dbReference type="ProteomicsDB" id="55769">
    <molecule id="P46934-2"/>
</dbReference>
<dbReference type="ProteomicsDB" id="55770">
    <molecule id="P46934-3"/>
</dbReference>
<dbReference type="ProteomicsDB" id="55771">
    <molecule id="P46934-4"/>
</dbReference>
<dbReference type="Pumba" id="P46934"/>
<dbReference type="Antibodypedia" id="25114">
    <property type="antibodies" value="319 antibodies from 39 providers"/>
</dbReference>
<dbReference type="CPTC" id="P46934">
    <property type="antibodies" value="3 antibodies"/>
</dbReference>
<dbReference type="DNASU" id="4734"/>
<dbReference type="Ensembl" id="ENST00000338963.6">
    <molecule id="P46934-3"/>
    <property type="protein sequence ID" value="ENSP00000345530.2"/>
    <property type="gene ID" value="ENSG00000069869.17"/>
</dbReference>
<dbReference type="Ensembl" id="ENST00000435532.8">
    <molecule id="P46934-4"/>
    <property type="protein sequence ID" value="ENSP00000410613.3"/>
    <property type="gene ID" value="ENSG00000069869.17"/>
</dbReference>
<dbReference type="Ensembl" id="ENST00000506154.1">
    <molecule id="P46934-2"/>
    <property type="protein sequence ID" value="ENSP00000422705.1"/>
    <property type="gene ID" value="ENSG00000069869.17"/>
</dbReference>
<dbReference type="Ensembl" id="ENST00000508342.5">
    <molecule id="P46934-1"/>
    <property type="protein sequence ID" value="ENSP00000424827.1"/>
    <property type="gene ID" value="ENSG00000069869.17"/>
</dbReference>
<dbReference type="GeneID" id="4734"/>
<dbReference type="KEGG" id="hsa:4734"/>
<dbReference type="MANE-Select" id="ENST00000435532.8">
    <molecule id="P46934-4"/>
    <property type="protein sequence ID" value="ENSP00000410613.3"/>
    <property type="RefSeq nucleotide sequence ID" value="NM_006154.4"/>
    <property type="RefSeq protein sequence ID" value="NP_006145.2"/>
</dbReference>
<dbReference type="UCSC" id="uc002adi.5">
    <molecule id="P46934-1"/>
    <property type="organism name" value="human"/>
</dbReference>
<dbReference type="AGR" id="HGNC:7727"/>
<dbReference type="CTD" id="4734"/>
<dbReference type="DisGeNET" id="4734"/>
<dbReference type="GeneCards" id="NEDD4"/>
<dbReference type="HGNC" id="HGNC:7727">
    <property type="gene designation" value="NEDD4"/>
</dbReference>
<dbReference type="HPA" id="ENSG00000069869">
    <property type="expression patterns" value="Tissue enhanced (skeletal muscle, tongue)"/>
</dbReference>
<dbReference type="MalaCards" id="NEDD4"/>
<dbReference type="MIM" id="602278">
    <property type="type" value="gene"/>
</dbReference>
<dbReference type="neXtProt" id="NX_P46934"/>
<dbReference type="OpenTargets" id="ENSG00000069869"/>
<dbReference type="PharmGKB" id="PA31533"/>
<dbReference type="VEuPathDB" id="HostDB:ENSG00000069869"/>
<dbReference type="eggNOG" id="KOG0940">
    <property type="taxonomic scope" value="Eukaryota"/>
</dbReference>
<dbReference type="GeneTree" id="ENSGT00940000158905"/>
<dbReference type="HOGENOM" id="CLU_002173_3_0_1"/>
<dbReference type="InParanoid" id="P46934"/>
<dbReference type="OMA" id="GWGMQIA"/>
<dbReference type="OrthoDB" id="423283at2759"/>
<dbReference type="PAN-GO" id="P46934">
    <property type="GO annotations" value="13 GO annotations based on evolutionary models"/>
</dbReference>
<dbReference type="PhylomeDB" id="P46934"/>
<dbReference type="TreeFam" id="TF323658"/>
<dbReference type="BRENDA" id="2.3.2.26">
    <property type="organism ID" value="2681"/>
</dbReference>
<dbReference type="PathwayCommons" id="P46934"/>
<dbReference type="Reactome" id="R-HSA-1169408">
    <property type="pathway name" value="ISG15 antiviral mechanism"/>
</dbReference>
<dbReference type="Reactome" id="R-HSA-1253288">
    <property type="pathway name" value="Downregulation of ERBB4 signaling"/>
</dbReference>
<dbReference type="Reactome" id="R-HSA-8948747">
    <property type="pathway name" value="Regulation of PTEN localization"/>
</dbReference>
<dbReference type="Reactome" id="R-HSA-8948751">
    <property type="pathway name" value="Regulation of PTEN stability and activity"/>
</dbReference>
<dbReference type="Reactome" id="R-HSA-983168">
    <property type="pathway name" value="Antigen processing: Ubiquitination &amp; Proteasome degradation"/>
</dbReference>
<dbReference type="SignaLink" id="P46934"/>
<dbReference type="SIGNOR" id="P46934"/>
<dbReference type="UniPathway" id="UPA00143"/>
<dbReference type="BioGRID-ORCS" id="4734">
    <property type="hits" value="11 hits in 1196 CRISPR screens"/>
</dbReference>
<dbReference type="CD-CODE" id="03E7CE7B">
    <property type="entry name" value="NEDD4 condensates"/>
</dbReference>
<dbReference type="ChiTaRS" id="NEDD4">
    <property type="organism name" value="human"/>
</dbReference>
<dbReference type="EvolutionaryTrace" id="P46934"/>
<dbReference type="GeneWiki" id="NEDD4"/>
<dbReference type="GenomeRNAi" id="4734"/>
<dbReference type="Pharos" id="P46934">
    <property type="development level" value="Tchem"/>
</dbReference>
<dbReference type="PRO" id="PR:P46934"/>
<dbReference type="Proteomes" id="UP000005640">
    <property type="component" value="Chromosome 15"/>
</dbReference>
<dbReference type="RNAct" id="P46934">
    <property type="molecule type" value="protein"/>
</dbReference>
<dbReference type="Bgee" id="ENSG00000069869">
    <property type="expression patterns" value="Expressed in male germ line stem cell (sensu Vertebrata) in testis and 168 other cell types or tissues"/>
</dbReference>
<dbReference type="ExpressionAtlas" id="P46934">
    <property type="expression patterns" value="baseline and differential"/>
</dbReference>
<dbReference type="GO" id="GO:0016327">
    <property type="term" value="C:apicolateral plasma membrane"/>
    <property type="evidence" value="ECO:0000304"/>
    <property type="project" value="BHF-UCL"/>
</dbReference>
<dbReference type="GO" id="GO:0005938">
    <property type="term" value="C:cell cortex"/>
    <property type="evidence" value="ECO:0000314"/>
    <property type="project" value="BHF-UCL"/>
</dbReference>
<dbReference type="GO" id="GO:0000785">
    <property type="term" value="C:chromatin"/>
    <property type="evidence" value="ECO:0000314"/>
    <property type="project" value="BHF-UCL"/>
</dbReference>
<dbReference type="GO" id="GO:0005737">
    <property type="term" value="C:cytoplasm"/>
    <property type="evidence" value="ECO:0000314"/>
    <property type="project" value="UniProtKB"/>
</dbReference>
<dbReference type="GO" id="GO:0005829">
    <property type="term" value="C:cytosol"/>
    <property type="evidence" value="ECO:0000314"/>
    <property type="project" value="HPA"/>
</dbReference>
<dbReference type="GO" id="GO:0070062">
    <property type="term" value="C:extracellular exosome"/>
    <property type="evidence" value="ECO:0007005"/>
    <property type="project" value="UniProtKB"/>
</dbReference>
<dbReference type="GO" id="GO:0098978">
    <property type="term" value="C:glutamatergic synapse"/>
    <property type="evidence" value="ECO:0007669"/>
    <property type="project" value="Ensembl"/>
</dbReference>
<dbReference type="GO" id="GO:0005794">
    <property type="term" value="C:Golgi apparatus"/>
    <property type="evidence" value="ECO:0000314"/>
    <property type="project" value="UniProtKB"/>
</dbReference>
<dbReference type="GO" id="GO:0005654">
    <property type="term" value="C:nucleoplasm"/>
    <property type="evidence" value="ECO:0000314"/>
    <property type="project" value="HPA"/>
</dbReference>
<dbReference type="GO" id="GO:0005634">
    <property type="term" value="C:nucleus"/>
    <property type="evidence" value="ECO:0000314"/>
    <property type="project" value="UniProtKB"/>
</dbReference>
<dbReference type="GO" id="GO:0048471">
    <property type="term" value="C:perinuclear region of cytoplasm"/>
    <property type="evidence" value="ECO:0000314"/>
    <property type="project" value="BHF-UCL"/>
</dbReference>
<dbReference type="GO" id="GO:0005886">
    <property type="term" value="C:plasma membrane"/>
    <property type="evidence" value="ECO:0000314"/>
    <property type="project" value="UniProtKB"/>
</dbReference>
<dbReference type="GO" id="GO:0099524">
    <property type="term" value="C:postsynaptic cytosol"/>
    <property type="evidence" value="ECO:0007669"/>
    <property type="project" value="Ensembl"/>
</dbReference>
<dbReference type="GO" id="GO:0032991">
    <property type="term" value="C:protein-containing complex"/>
    <property type="evidence" value="ECO:0000314"/>
    <property type="project" value="ARUK-UCL"/>
</dbReference>
<dbReference type="GO" id="GO:0000151">
    <property type="term" value="C:ubiquitin ligase complex"/>
    <property type="evidence" value="ECO:0000250"/>
    <property type="project" value="BHF-UCL"/>
</dbReference>
<dbReference type="GO" id="GO:0031698">
    <property type="term" value="F:beta-2 adrenergic receptor binding"/>
    <property type="evidence" value="ECO:0000314"/>
    <property type="project" value="UniProtKB"/>
</dbReference>
<dbReference type="GO" id="GO:0016248">
    <property type="term" value="F:channel inhibitor activity"/>
    <property type="evidence" value="ECO:0000314"/>
    <property type="project" value="BHF-UCL"/>
</dbReference>
<dbReference type="GO" id="GO:0019899">
    <property type="term" value="F:enzyme binding"/>
    <property type="evidence" value="ECO:0000353"/>
    <property type="project" value="ARUK-UCL"/>
</dbReference>
<dbReference type="GO" id="GO:0035255">
    <property type="term" value="F:ionotropic glutamate receptor binding"/>
    <property type="evidence" value="ECO:0007669"/>
    <property type="project" value="Ensembl"/>
</dbReference>
<dbReference type="GO" id="GO:0050815">
    <property type="term" value="F:phosphoserine residue binding"/>
    <property type="evidence" value="ECO:0000250"/>
    <property type="project" value="BHF-UCL"/>
</dbReference>
<dbReference type="GO" id="GO:0050816">
    <property type="term" value="F:phosphothreonine residue binding"/>
    <property type="evidence" value="ECO:0000250"/>
    <property type="project" value="BHF-UCL"/>
</dbReference>
<dbReference type="GO" id="GO:0019870">
    <property type="term" value="F:potassium channel inhibitor activity"/>
    <property type="evidence" value="ECO:0000314"/>
    <property type="project" value="BHF-UCL"/>
</dbReference>
<dbReference type="GO" id="GO:0070064">
    <property type="term" value="F:proline-rich region binding"/>
    <property type="evidence" value="ECO:0000315"/>
    <property type="project" value="BHF-UCL"/>
</dbReference>
<dbReference type="GO" id="GO:0019904">
    <property type="term" value="F:protein domain specific binding"/>
    <property type="evidence" value="ECO:0000353"/>
    <property type="project" value="UniProtKB"/>
</dbReference>
<dbReference type="GO" id="GO:0070063">
    <property type="term" value="F:RNA polymerase binding"/>
    <property type="evidence" value="ECO:0000353"/>
    <property type="project" value="BHF-UCL"/>
</dbReference>
<dbReference type="GO" id="GO:0019871">
    <property type="term" value="F:sodium channel inhibitor activity"/>
    <property type="evidence" value="ECO:0000314"/>
    <property type="project" value="BHF-UCL"/>
</dbReference>
<dbReference type="GO" id="GO:0044325">
    <property type="term" value="F:transmembrane transporter binding"/>
    <property type="evidence" value="ECO:0000353"/>
    <property type="project" value="BHF-UCL"/>
</dbReference>
<dbReference type="GO" id="GO:0043130">
    <property type="term" value="F:ubiquitin binding"/>
    <property type="evidence" value="ECO:0000314"/>
    <property type="project" value="BHF-UCL"/>
</dbReference>
<dbReference type="GO" id="GO:0061630">
    <property type="term" value="F:ubiquitin protein ligase activity"/>
    <property type="evidence" value="ECO:0000314"/>
    <property type="project" value="UniProtKB"/>
</dbReference>
<dbReference type="GO" id="GO:0004842">
    <property type="term" value="F:ubiquitin-protein transferase activity"/>
    <property type="evidence" value="ECO:0000314"/>
    <property type="project" value="WormBase"/>
</dbReference>
<dbReference type="GO" id="GO:0002250">
    <property type="term" value="P:adaptive immune response"/>
    <property type="evidence" value="ECO:0007669"/>
    <property type="project" value="Ensembl"/>
</dbReference>
<dbReference type="GO" id="GO:0048514">
    <property type="term" value="P:blood vessel morphogenesis"/>
    <property type="evidence" value="ECO:0007669"/>
    <property type="project" value="Ensembl"/>
</dbReference>
<dbReference type="GO" id="GO:0034644">
    <property type="term" value="P:cellular response to UV"/>
    <property type="evidence" value="ECO:0000315"/>
    <property type="project" value="BHF-UCL"/>
</dbReference>
<dbReference type="GO" id="GO:0006974">
    <property type="term" value="P:DNA damage response"/>
    <property type="evidence" value="ECO:0000315"/>
    <property type="project" value="BHF-UCL"/>
</dbReference>
<dbReference type="GO" id="GO:0003197">
    <property type="term" value="P:endocardial cushion development"/>
    <property type="evidence" value="ECO:0007669"/>
    <property type="project" value="Ensembl"/>
</dbReference>
<dbReference type="GO" id="GO:0044111">
    <property type="term" value="P:formation of structure involved in a symbiotic process"/>
    <property type="evidence" value="ECO:0000315"/>
    <property type="project" value="UniProtKB"/>
</dbReference>
<dbReference type="GO" id="GO:0045087">
    <property type="term" value="P:innate immune response"/>
    <property type="evidence" value="ECO:0000314"/>
    <property type="project" value="UniProt"/>
</dbReference>
<dbReference type="GO" id="GO:0007041">
    <property type="term" value="P:lysosomal transport"/>
    <property type="evidence" value="ECO:0000314"/>
    <property type="project" value="UniProtKB"/>
</dbReference>
<dbReference type="GO" id="GO:1903765">
    <property type="term" value="P:negative regulation of potassium ion export across plasma membrane"/>
    <property type="evidence" value="ECO:0000314"/>
    <property type="project" value="BHF-UCL"/>
</dbReference>
<dbReference type="GO" id="GO:0010766">
    <property type="term" value="P:negative regulation of sodium ion transport"/>
    <property type="evidence" value="ECO:0000314"/>
    <property type="project" value="UniProtKB"/>
</dbReference>
<dbReference type="GO" id="GO:0000122">
    <property type="term" value="P:negative regulation of transcription by RNA polymerase II"/>
    <property type="evidence" value="ECO:0000315"/>
    <property type="project" value="BHF-UCL"/>
</dbReference>
<dbReference type="GO" id="GO:0030948">
    <property type="term" value="P:negative regulation of vascular endothelial growth factor receptor signaling pathway"/>
    <property type="evidence" value="ECO:0000250"/>
    <property type="project" value="UniProtKB"/>
</dbReference>
<dbReference type="GO" id="GO:0007528">
    <property type="term" value="P:neuromuscular junction development"/>
    <property type="evidence" value="ECO:0000318"/>
    <property type="project" value="GO_Central"/>
</dbReference>
<dbReference type="GO" id="GO:0031175">
    <property type="term" value="P:neuron projection development"/>
    <property type="evidence" value="ECO:0000270"/>
    <property type="project" value="BHF-UCL"/>
</dbReference>
<dbReference type="GO" id="GO:0042921">
    <property type="term" value="P:nuclear receptor-mediated glucocorticoid signaling pathway"/>
    <property type="evidence" value="ECO:0000314"/>
    <property type="project" value="BHF-UCL"/>
</dbReference>
<dbReference type="GO" id="GO:0003151">
    <property type="term" value="P:outflow tract morphogenesis"/>
    <property type="evidence" value="ECO:0007669"/>
    <property type="project" value="Ensembl"/>
</dbReference>
<dbReference type="GO" id="GO:0046824">
    <property type="term" value="P:positive regulation of nucleocytoplasmic transport"/>
    <property type="evidence" value="ECO:0000314"/>
    <property type="project" value="BHF-UCL"/>
</dbReference>
<dbReference type="GO" id="GO:0051897">
    <property type="term" value="P:positive regulation of phosphatidylinositol 3-kinase/protein kinase B signal transduction"/>
    <property type="evidence" value="ECO:0000315"/>
    <property type="project" value="BHF-UCL"/>
</dbReference>
<dbReference type="GO" id="GO:0045732">
    <property type="term" value="P:positive regulation of protein catabolic process"/>
    <property type="evidence" value="ECO:0000314"/>
    <property type="project" value="MGI"/>
</dbReference>
<dbReference type="GO" id="GO:0050847">
    <property type="term" value="P:progesterone receptor signaling pathway"/>
    <property type="evidence" value="ECO:0000314"/>
    <property type="project" value="BHF-UCL"/>
</dbReference>
<dbReference type="GO" id="GO:0070534">
    <property type="term" value="P:protein K63-linked ubiquitination"/>
    <property type="evidence" value="ECO:0000250"/>
    <property type="project" value="UniProtKB"/>
</dbReference>
<dbReference type="GO" id="GO:0006513">
    <property type="term" value="P:protein monoubiquitination"/>
    <property type="evidence" value="ECO:0007669"/>
    <property type="project" value="Ensembl"/>
</dbReference>
<dbReference type="GO" id="GO:0006622">
    <property type="term" value="P:protein targeting to lysosome"/>
    <property type="evidence" value="ECO:0000353"/>
    <property type="project" value="ARUK-UCL"/>
</dbReference>
<dbReference type="GO" id="GO:0016567">
    <property type="term" value="P:protein ubiquitination"/>
    <property type="evidence" value="ECO:0000314"/>
    <property type="project" value="UniProtKB"/>
</dbReference>
<dbReference type="GO" id="GO:0032801">
    <property type="term" value="P:receptor catabolic process"/>
    <property type="evidence" value="ECO:0000314"/>
    <property type="project" value="UniProtKB"/>
</dbReference>
<dbReference type="GO" id="GO:0031623">
    <property type="term" value="P:receptor internalization"/>
    <property type="evidence" value="ECO:0000314"/>
    <property type="project" value="UniProtKB"/>
</dbReference>
<dbReference type="GO" id="GO:0048814">
    <property type="term" value="P:regulation of dendrite morphogenesis"/>
    <property type="evidence" value="ECO:0000250"/>
    <property type="project" value="UniProtKB"/>
</dbReference>
<dbReference type="GO" id="GO:0016241">
    <property type="term" value="P:regulation of macroautophagy"/>
    <property type="evidence" value="ECO:0000304"/>
    <property type="project" value="ParkinsonsUK-UCL"/>
</dbReference>
<dbReference type="GO" id="GO:0042391">
    <property type="term" value="P:regulation of membrane potential"/>
    <property type="evidence" value="ECO:0000314"/>
    <property type="project" value="BHF-UCL"/>
</dbReference>
<dbReference type="GO" id="GO:0050807">
    <property type="term" value="P:regulation of synapse organization"/>
    <property type="evidence" value="ECO:0000318"/>
    <property type="project" value="GO_Central"/>
</dbReference>
<dbReference type="GO" id="GO:0051592">
    <property type="term" value="P:response to calcium ion"/>
    <property type="evidence" value="ECO:0000304"/>
    <property type="project" value="BHF-UCL"/>
</dbReference>
<dbReference type="GO" id="GO:0006814">
    <property type="term" value="P:sodium ion transport"/>
    <property type="evidence" value="ECO:0007669"/>
    <property type="project" value="Ensembl"/>
</dbReference>
<dbReference type="GO" id="GO:0042110">
    <property type="term" value="P:T cell activation"/>
    <property type="evidence" value="ECO:0007669"/>
    <property type="project" value="Ensembl"/>
</dbReference>
<dbReference type="GO" id="GO:0006511">
    <property type="term" value="P:ubiquitin-dependent protein catabolic process"/>
    <property type="evidence" value="ECO:0000314"/>
    <property type="project" value="UniProtKB"/>
</dbReference>
<dbReference type="GO" id="GO:0043162">
    <property type="term" value="P:ubiquitin-dependent protein catabolic process via the multivesicular body sorting pathway"/>
    <property type="evidence" value="ECO:0000315"/>
    <property type="project" value="BHF-UCL"/>
</dbReference>
<dbReference type="GO" id="GO:0046755">
    <property type="term" value="P:viral budding"/>
    <property type="evidence" value="ECO:0000315"/>
    <property type="project" value="BHF-UCL"/>
</dbReference>
<dbReference type="CDD" id="cd00078">
    <property type="entry name" value="HECTc"/>
    <property type="match status" value="1"/>
</dbReference>
<dbReference type="CDD" id="cd00201">
    <property type="entry name" value="WW"/>
    <property type="match status" value="4"/>
</dbReference>
<dbReference type="FunFam" id="2.20.70.10:FF:000017">
    <property type="entry name" value="E3 ubiquitin-protein ligase"/>
    <property type="match status" value="1"/>
</dbReference>
<dbReference type="FunFam" id="3.90.1750.10:FF:000026">
    <property type="entry name" value="E3 ubiquitin-protein ligase HACE1"/>
    <property type="match status" value="1"/>
</dbReference>
<dbReference type="FunFam" id="2.20.70.10:FF:000099">
    <property type="entry name" value="E3 ubiquitin-protein ligase NEDD4"/>
    <property type="match status" value="1"/>
</dbReference>
<dbReference type="FunFam" id="2.60.40.150:FF:000146">
    <property type="entry name" value="E3 ubiquitin-protein ligase NEDD4 isoform X1"/>
    <property type="match status" value="1"/>
</dbReference>
<dbReference type="FunFam" id="2.20.70.10:FF:000096">
    <property type="entry name" value="E3 ubiquitin-protein ligase NEDD4 isoform X4"/>
    <property type="match status" value="1"/>
</dbReference>
<dbReference type="FunFam" id="3.30.2160.10:FF:000001">
    <property type="entry name" value="E3 ubiquitin-protein ligase NEDD4-like"/>
    <property type="match status" value="1"/>
</dbReference>
<dbReference type="FunFam" id="3.30.2410.10:FF:000001">
    <property type="entry name" value="E3 ubiquitin-protein ligase NEDD4-like"/>
    <property type="match status" value="1"/>
</dbReference>
<dbReference type="FunFam" id="3.90.1750.10:FF:000001">
    <property type="entry name" value="E3 ubiquitin-protein ligase NEDD4-like"/>
    <property type="match status" value="1"/>
</dbReference>
<dbReference type="FunFam" id="2.20.70.10:FF:000006">
    <property type="entry name" value="E3 ubiquitin-protein ligase NEDD4-like protein"/>
    <property type="match status" value="1"/>
</dbReference>
<dbReference type="Gene3D" id="2.20.70.10">
    <property type="match status" value="3"/>
</dbReference>
<dbReference type="Gene3D" id="2.60.40.150">
    <property type="entry name" value="C2 domain"/>
    <property type="match status" value="1"/>
</dbReference>
<dbReference type="Gene3D" id="3.30.2160.10">
    <property type="entry name" value="Hect, E3 ligase catalytic domain"/>
    <property type="match status" value="1"/>
</dbReference>
<dbReference type="Gene3D" id="3.30.2410.10">
    <property type="entry name" value="Hect, E3 ligase catalytic domain"/>
    <property type="match status" value="1"/>
</dbReference>
<dbReference type="Gene3D" id="3.90.1750.10">
    <property type="entry name" value="Hect, E3 ligase catalytic domains"/>
    <property type="match status" value="1"/>
</dbReference>
<dbReference type="InterPro" id="IPR035892">
    <property type="entry name" value="C2_domain_sf"/>
</dbReference>
<dbReference type="InterPro" id="IPR050409">
    <property type="entry name" value="E3_ubiq-protein_ligase"/>
</dbReference>
<dbReference type="InterPro" id="IPR000569">
    <property type="entry name" value="HECT_dom"/>
</dbReference>
<dbReference type="InterPro" id="IPR035983">
    <property type="entry name" value="Hect_E3_ubiquitin_ligase"/>
</dbReference>
<dbReference type="InterPro" id="IPR001202">
    <property type="entry name" value="WW_dom"/>
</dbReference>
<dbReference type="InterPro" id="IPR036020">
    <property type="entry name" value="WW_dom_sf"/>
</dbReference>
<dbReference type="PANTHER" id="PTHR11254:SF282">
    <property type="entry name" value="E3 UBIQUITIN-PROTEIN LIGASE NEDD4"/>
    <property type="match status" value="1"/>
</dbReference>
<dbReference type="PANTHER" id="PTHR11254">
    <property type="entry name" value="HECT DOMAIN UBIQUITIN-PROTEIN LIGASE"/>
    <property type="match status" value="1"/>
</dbReference>
<dbReference type="Pfam" id="PF00632">
    <property type="entry name" value="HECT"/>
    <property type="match status" value="1"/>
</dbReference>
<dbReference type="Pfam" id="PF00397">
    <property type="entry name" value="WW"/>
    <property type="match status" value="4"/>
</dbReference>
<dbReference type="SMART" id="SM00119">
    <property type="entry name" value="HECTc"/>
    <property type="match status" value="1"/>
</dbReference>
<dbReference type="SMART" id="SM00456">
    <property type="entry name" value="WW"/>
    <property type="match status" value="4"/>
</dbReference>
<dbReference type="SUPFAM" id="SSF56204">
    <property type="entry name" value="Hect, E3 ligase catalytic domain"/>
    <property type="match status" value="1"/>
</dbReference>
<dbReference type="SUPFAM" id="SSF51045">
    <property type="entry name" value="WW domain"/>
    <property type="match status" value="4"/>
</dbReference>
<dbReference type="PROSITE" id="PS50237">
    <property type="entry name" value="HECT"/>
    <property type="match status" value="1"/>
</dbReference>
<dbReference type="PROSITE" id="PS01159">
    <property type="entry name" value="WW_DOMAIN_1"/>
    <property type="match status" value="4"/>
</dbReference>
<dbReference type="PROSITE" id="PS50020">
    <property type="entry name" value="WW_DOMAIN_2"/>
    <property type="match status" value="4"/>
</dbReference>
<sequence length="1319" mass="149114">MAQSLRLHFAARRSNTYPLSETSGDDLDSHVHMCFKRPTRISTSNVVQMKLTPRQTALAPLIKENVQSQERSSVPSSENVNKKSSCLQISLQPTRYSGYLQSSNVLADSDDASFTCILKDGIYSSAVVDNELNAVNDGHLVSSPAICSGSLSNFSTSDNGSYSSNGSDFGSCASITSGGSYTNSVISDSSSYTFPPSDDTFLGGNLPSDSTSNRSVPNRNTTPCEIFSRSTSTDPFVQDDLEHGLEIMKLPVSRNTKIPLKRYSSLVIFPRSPSTTRPTSPTSLCTLLSKGSYQTSHQFIISPSEIAHNEDGTSAKGFLSTAVNGLRLSKTICTPGEVRDIRPLHRKGSLQKKIVLSNNTPRQTVCEKSSEGYSCVSVHFTQRKAATLDCETTNGDCKPEMSEIKLNSDSEYIKLMHRTSACLPSSQNVDCQININGELERPHSQMNKNHGILRRSISLGGAYPNISCLSSLKHNCSKGGPSQLLIKFASGNEGKVDNLSRDSNRDCTNELSNSCKTRDDFLGQVDVPLYPLPTENPRLERPYTFKDFVLHPRSHKSRVKGYLRLKMTYLPKTSGSEDDNAEQAEELEPGWVVLDQPDAACHLQQQQEPSPLPPGWEERQDILGRTYYVNHESRRTQWKRPTPQDNLTDAENGNIQLQAQRAFTTRRQISEETESVDNRESSENWEIIREDEATMYSNQAFPSPPPSSNLDVPTHLAEELNARLTIFGNSAVSQPASSSNHSSRRGSLQAYTFEEQPTLPVLLPTSSGLPPGWEEKQDERGRSYYVDHNSRTTTWTKPTVQATVETSQLTSSQSSAGPQSQASTSDSGQQVTQPSEIEQGFLPKGWEVRHAPNGRPFFIDHNTKTTTWEDPRLKIPAHLRGKTSLDTSNDLGPLPPGWEERTHTDGRIFYINHNIKRTQWEDPRLENVAITGPAVPYSRDYKRKYEFFRRKLKKQNDIPNKFEMKLRRATVLEDSYRRIMGVKRADFLKARLWIEFDGEKGLDYGGVAREWFFLISKEMFNPYYGLFEYSATDNYTLQINPNSGLCNEDHLSYFKFIGRVAGMAVYHGKLLDGFFIRPFYKMMLHKPITLHDMESVDSEYYNSLRWILENDPTELDLRFIIDEELFGQTHQHELKNGGSEIVVTNKNKKEYIYLVIQWRFVNRIQKQMAAFKEGFFELIPQDLIKIFDENELELLMCGLGDVDVNDWREHTKYKNGYSANHQVIQWFWKAVLMMDSEKRIRLLQFVTGTSRVPMNGFAELYGSNGPQSFTVEQWGTPEKLPRAHTCFNRLDLPPYESFEELWDKLQMAIENTQGFDGVD</sequence>
<name>NEDD4_HUMAN</name>
<reference key="1">
    <citation type="journal article" date="2007" name="Cell">
        <title>NEDD4-1 is a proto-oncogenic ubiquitin ligase for PTEN.</title>
        <authorList>
            <person name="Wang X."/>
            <person name="Trotman L.C."/>
            <person name="Koppie T."/>
            <person name="Alimonti A."/>
            <person name="Chen Z."/>
            <person name="Gao Z."/>
            <person name="Wang J."/>
            <person name="Erdjument-Bromage H."/>
            <person name="Tempst P."/>
            <person name="Cordon-Cardo C."/>
            <person name="Pandolfi P.P."/>
            <person name="Jiang X."/>
        </authorList>
    </citation>
    <scope>NUCLEOTIDE SEQUENCE [GENOMIC DNA]</scope>
    <scope>IDENTIFICATION BY MASS SPECTROMETRY</scope>
    <scope>FUNCTION</scope>
    <scope>CATALYTIC ACTIVITY</scope>
    <scope>INTERACTION WITH PTEN</scope>
</reference>
<reference key="2">
    <citation type="journal article" date="1995" name="DNA Res.">
        <title>Prediction of the coding sequences of unidentified human genes. III. The coding sequences of 40 new genes (KIAA0081-KIAA0120) deduced by analysis of cDNA clones from human cell line KG-1.</title>
        <authorList>
            <person name="Nagase T."/>
            <person name="Miyajima N."/>
            <person name="Tanaka A."/>
            <person name="Sazuka T."/>
            <person name="Seki N."/>
            <person name="Sato S."/>
            <person name="Tabata S."/>
            <person name="Ishikawa K."/>
            <person name="Kawarabayasi Y."/>
            <person name="Kotani H."/>
            <person name="Nomura N."/>
        </authorList>
    </citation>
    <scope>NUCLEOTIDE SEQUENCE [LARGE SCALE MRNA] (ISOFORM 4)</scope>
    <scope>VARIANTS GLN-679 AND SER-698</scope>
    <source>
        <tissue>Bone marrow</tissue>
    </source>
</reference>
<reference key="3">
    <citation type="journal article" date="2004" name="Nat. Genet.">
        <title>Complete sequencing and characterization of 21,243 full-length human cDNAs.</title>
        <authorList>
            <person name="Ota T."/>
            <person name="Suzuki Y."/>
            <person name="Nishikawa T."/>
            <person name="Otsuki T."/>
            <person name="Sugiyama T."/>
            <person name="Irie R."/>
            <person name="Wakamatsu A."/>
            <person name="Hayashi K."/>
            <person name="Sato H."/>
            <person name="Nagai K."/>
            <person name="Kimura K."/>
            <person name="Makita H."/>
            <person name="Sekine M."/>
            <person name="Obayashi M."/>
            <person name="Nishi T."/>
            <person name="Shibahara T."/>
            <person name="Tanaka T."/>
            <person name="Ishii S."/>
            <person name="Yamamoto J."/>
            <person name="Saito K."/>
            <person name="Kawai Y."/>
            <person name="Isono Y."/>
            <person name="Nakamura Y."/>
            <person name="Nagahari K."/>
            <person name="Murakami K."/>
            <person name="Yasuda T."/>
            <person name="Iwayanagi T."/>
            <person name="Wagatsuma M."/>
            <person name="Shiratori A."/>
            <person name="Sudo H."/>
            <person name="Hosoiri T."/>
            <person name="Kaku Y."/>
            <person name="Kodaira H."/>
            <person name="Kondo H."/>
            <person name="Sugawara M."/>
            <person name="Takahashi M."/>
            <person name="Kanda K."/>
            <person name="Yokoi T."/>
            <person name="Furuya T."/>
            <person name="Kikkawa E."/>
            <person name="Omura Y."/>
            <person name="Abe K."/>
            <person name="Kamihara K."/>
            <person name="Katsuta N."/>
            <person name="Sato K."/>
            <person name="Tanikawa M."/>
            <person name="Yamazaki M."/>
            <person name="Ninomiya K."/>
            <person name="Ishibashi T."/>
            <person name="Yamashita H."/>
            <person name="Murakawa K."/>
            <person name="Fujimori K."/>
            <person name="Tanai H."/>
            <person name="Kimata M."/>
            <person name="Watanabe M."/>
            <person name="Hiraoka S."/>
            <person name="Chiba Y."/>
            <person name="Ishida S."/>
            <person name="Ono Y."/>
            <person name="Takiguchi S."/>
            <person name="Watanabe S."/>
            <person name="Yosida M."/>
            <person name="Hotuta T."/>
            <person name="Kusano J."/>
            <person name="Kanehori K."/>
            <person name="Takahashi-Fujii A."/>
            <person name="Hara H."/>
            <person name="Tanase T.-O."/>
            <person name="Nomura Y."/>
            <person name="Togiya S."/>
            <person name="Komai F."/>
            <person name="Hara R."/>
            <person name="Takeuchi K."/>
            <person name="Arita M."/>
            <person name="Imose N."/>
            <person name="Musashino K."/>
            <person name="Yuuki H."/>
            <person name="Oshima A."/>
            <person name="Sasaki N."/>
            <person name="Aotsuka S."/>
            <person name="Yoshikawa Y."/>
            <person name="Matsunawa H."/>
            <person name="Ichihara T."/>
            <person name="Shiohata N."/>
            <person name="Sano S."/>
            <person name="Moriya S."/>
            <person name="Momiyama H."/>
            <person name="Satoh N."/>
            <person name="Takami S."/>
            <person name="Terashima Y."/>
            <person name="Suzuki O."/>
            <person name="Nakagawa S."/>
            <person name="Senoh A."/>
            <person name="Mizoguchi H."/>
            <person name="Goto Y."/>
            <person name="Shimizu F."/>
            <person name="Wakebe H."/>
            <person name="Hishigaki H."/>
            <person name="Watanabe T."/>
            <person name="Sugiyama A."/>
            <person name="Takemoto M."/>
            <person name="Kawakami B."/>
            <person name="Yamazaki M."/>
            <person name="Watanabe K."/>
            <person name="Kumagai A."/>
            <person name="Itakura S."/>
            <person name="Fukuzumi Y."/>
            <person name="Fujimori Y."/>
            <person name="Komiyama M."/>
            <person name="Tashiro H."/>
            <person name="Tanigami A."/>
            <person name="Fujiwara T."/>
            <person name="Ono T."/>
            <person name="Yamada K."/>
            <person name="Fujii Y."/>
            <person name="Ozaki K."/>
            <person name="Hirao M."/>
            <person name="Ohmori Y."/>
            <person name="Kawabata A."/>
            <person name="Hikiji T."/>
            <person name="Kobatake N."/>
            <person name="Inagaki H."/>
            <person name="Ikema Y."/>
            <person name="Okamoto S."/>
            <person name="Okitani R."/>
            <person name="Kawakami T."/>
            <person name="Noguchi S."/>
            <person name="Itoh T."/>
            <person name="Shigeta K."/>
            <person name="Senba T."/>
            <person name="Matsumura K."/>
            <person name="Nakajima Y."/>
            <person name="Mizuno T."/>
            <person name="Morinaga M."/>
            <person name="Sasaki M."/>
            <person name="Togashi T."/>
            <person name="Oyama M."/>
            <person name="Hata H."/>
            <person name="Watanabe M."/>
            <person name="Komatsu T."/>
            <person name="Mizushima-Sugano J."/>
            <person name="Satoh T."/>
            <person name="Shirai Y."/>
            <person name="Takahashi Y."/>
            <person name="Nakagawa K."/>
            <person name="Okumura K."/>
            <person name="Nagase T."/>
            <person name="Nomura N."/>
            <person name="Kikuchi H."/>
            <person name="Masuho Y."/>
            <person name="Yamashita R."/>
            <person name="Nakai K."/>
            <person name="Yada T."/>
            <person name="Nakamura Y."/>
            <person name="Ohara O."/>
            <person name="Isogai T."/>
            <person name="Sugano S."/>
        </authorList>
    </citation>
    <scope>NUCLEOTIDE SEQUENCE [LARGE SCALE MRNA] (ISOFORM 4)</scope>
    <scope>VARIANTS GLN-679 AND SER-698</scope>
    <source>
        <tissue>Trachea</tissue>
    </source>
</reference>
<reference key="4">
    <citation type="submission" date="2004-02" db="EMBL/GenBank/DDBJ databases">
        <title>Identification of a human cell proliferation inducing gene.</title>
        <authorList>
            <person name="Kim J.W."/>
        </authorList>
    </citation>
    <scope>NUCLEOTIDE SEQUENCE [LARGE SCALE MRNA] (ISOFORM 4)</scope>
    <scope>VARIANTS GLN-679 AND SER-698</scope>
</reference>
<reference key="5">
    <citation type="journal article" date="2007" name="BMC Genomics">
        <title>The full-ORF clone resource of the German cDNA consortium.</title>
        <authorList>
            <person name="Bechtel S."/>
            <person name="Rosenfelder H."/>
            <person name="Duda A."/>
            <person name="Schmidt C.P."/>
            <person name="Ernst U."/>
            <person name="Wellenreuther R."/>
            <person name="Mehrle A."/>
            <person name="Schuster C."/>
            <person name="Bahr A."/>
            <person name="Bloecker H."/>
            <person name="Heubner D."/>
            <person name="Hoerlein A."/>
            <person name="Michel G."/>
            <person name="Wedler H."/>
            <person name="Koehrer K."/>
            <person name="Ottenwaelder B."/>
            <person name="Poustka A."/>
            <person name="Wiemann S."/>
            <person name="Schupp I."/>
        </authorList>
    </citation>
    <scope>NUCLEOTIDE SEQUENCE [LARGE SCALE MRNA] (ISOFORM 3)</scope>
    <source>
        <tissue>Adipose tissue</tissue>
    </source>
</reference>
<reference key="6">
    <citation type="journal article" date="2006" name="Nature">
        <title>Analysis of the DNA sequence and duplication history of human chromosome 15.</title>
        <authorList>
            <person name="Zody M.C."/>
            <person name="Garber M."/>
            <person name="Sharpe T."/>
            <person name="Young S.K."/>
            <person name="Rowen L."/>
            <person name="O'Neill K."/>
            <person name="Whittaker C.A."/>
            <person name="Kamal M."/>
            <person name="Chang J.L."/>
            <person name="Cuomo C.A."/>
            <person name="Dewar K."/>
            <person name="FitzGerald M.G."/>
            <person name="Kodira C.D."/>
            <person name="Madan A."/>
            <person name="Qin S."/>
            <person name="Yang X."/>
            <person name="Abbasi N."/>
            <person name="Abouelleil A."/>
            <person name="Arachchi H.M."/>
            <person name="Baradarani L."/>
            <person name="Birditt B."/>
            <person name="Bloom S."/>
            <person name="Bloom T."/>
            <person name="Borowsky M.L."/>
            <person name="Burke J."/>
            <person name="Butler J."/>
            <person name="Cook A."/>
            <person name="DeArellano K."/>
            <person name="DeCaprio D."/>
            <person name="Dorris L. III"/>
            <person name="Dors M."/>
            <person name="Eichler E.E."/>
            <person name="Engels R."/>
            <person name="Fahey J."/>
            <person name="Fleetwood P."/>
            <person name="Friedman C."/>
            <person name="Gearin G."/>
            <person name="Hall J.L."/>
            <person name="Hensley G."/>
            <person name="Johnson E."/>
            <person name="Jones C."/>
            <person name="Kamat A."/>
            <person name="Kaur A."/>
            <person name="Locke D.P."/>
            <person name="Madan A."/>
            <person name="Munson G."/>
            <person name="Jaffe D.B."/>
            <person name="Lui A."/>
            <person name="Macdonald P."/>
            <person name="Mauceli E."/>
            <person name="Naylor J.W."/>
            <person name="Nesbitt R."/>
            <person name="Nicol R."/>
            <person name="O'Leary S.B."/>
            <person name="Ratcliffe A."/>
            <person name="Rounsley S."/>
            <person name="She X."/>
            <person name="Sneddon K.M.B."/>
            <person name="Stewart S."/>
            <person name="Sougnez C."/>
            <person name="Stone S.M."/>
            <person name="Topham K."/>
            <person name="Vincent D."/>
            <person name="Wang S."/>
            <person name="Zimmer A.R."/>
            <person name="Birren B.W."/>
            <person name="Hood L."/>
            <person name="Lander E.S."/>
            <person name="Nusbaum C."/>
        </authorList>
    </citation>
    <scope>NUCLEOTIDE SEQUENCE [LARGE SCALE GENOMIC DNA]</scope>
    <scope>VARIANTS GLN-679 AND SER-698</scope>
</reference>
<reference key="7">
    <citation type="submission" date="2005-07" db="EMBL/GenBank/DDBJ databases">
        <authorList>
            <person name="Mural R.J."/>
            <person name="Istrail S."/>
            <person name="Sutton G.G."/>
            <person name="Florea L."/>
            <person name="Halpern A.L."/>
            <person name="Mobarry C.M."/>
            <person name="Lippert R."/>
            <person name="Walenz B."/>
            <person name="Shatkay H."/>
            <person name="Dew I."/>
            <person name="Miller J.R."/>
            <person name="Flanigan M.J."/>
            <person name="Edwards N.J."/>
            <person name="Bolanos R."/>
            <person name="Fasulo D."/>
            <person name="Halldorsson B.V."/>
            <person name="Hannenhalli S."/>
            <person name="Turner R."/>
            <person name="Yooseph S."/>
            <person name="Lu F."/>
            <person name="Nusskern D.R."/>
            <person name="Shue B.C."/>
            <person name="Zheng X.H."/>
            <person name="Zhong F."/>
            <person name="Delcher A.L."/>
            <person name="Huson D.H."/>
            <person name="Kravitz S.A."/>
            <person name="Mouchard L."/>
            <person name="Reinert K."/>
            <person name="Remington K.A."/>
            <person name="Clark A.G."/>
            <person name="Waterman M.S."/>
            <person name="Eichler E.E."/>
            <person name="Adams M.D."/>
            <person name="Hunkapiller M.W."/>
            <person name="Myers E.W."/>
            <person name="Venter J.C."/>
        </authorList>
    </citation>
    <scope>NUCLEOTIDE SEQUENCE [LARGE SCALE GENOMIC DNA]</scope>
</reference>
<reference key="8">
    <citation type="journal article" date="2004" name="Genome Res.">
        <title>The status, quality, and expansion of the NIH full-length cDNA project: the Mammalian Gene Collection (MGC).</title>
        <authorList>
            <consortium name="The MGC Project Team"/>
        </authorList>
    </citation>
    <scope>NUCLEOTIDE SEQUENCE [LARGE SCALE MRNA] (ISOFORMS 1; 2 AND 4)</scope>
    <scope>VARIANTS GLN-679 AND SER-698</scope>
    <source>
        <tissue>Brain</tissue>
        <tissue>Testis</tissue>
    </source>
</reference>
<reference key="9">
    <citation type="journal article" date="2001" name="J. Biol. Chem.">
        <title>Nuclear import/export of hRPF1/Nedd4 regulates the ubiquitin-dependent degradation of its nuclear substrates.</title>
        <authorList>
            <person name="Hamilton M.H."/>
            <person name="Tcherepanova I."/>
            <person name="Huibregtse J.M."/>
            <person name="McDonnell D.P."/>
        </authorList>
    </citation>
    <scope>FUNCTION</scope>
    <scope>CATALYTIC ACTIVITY</scope>
    <scope>INTERACTION WITH DAZAP2</scope>
    <scope>SUBCELLULAR LOCATION</scope>
    <scope>NUCLEAR EXPORT SIGNAL</scope>
    <scope>MUTAGENESIS OF 724-LEU--ILE-726 AND CYS-1286</scope>
</reference>
<reference key="10">
    <citation type="journal article" date="2001" name="J. Biol. Chem.">
        <title>Nedd4 regulates ubiquitination and stability of the guanine-nucleotide exchange factor CNrasGEF.</title>
        <authorList>
            <person name="Pham N."/>
            <person name="Rotin D."/>
        </authorList>
    </citation>
    <scope>FUNCTION</scope>
    <scope>INTERACTION WITH RAPGEF2</scope>
</reference>
<reference key="11">
    <citation type="journal article" date="2003" name="J. Mol. Biol.">
        <title>Ebola virus matrix protein VP40 interaction with human cellular factors Tsg101 and Nedd4.</title>
        <authorList>
            <person name="Timmins J."/>
            <person name="Schoehn G."/>
            <person name="Ricard-Blum S."/>
            <person name="Scianimanico S."/>
            <person name="Vernet T."/>
            <person name="Ruigrok R.W."/>
            <person name="Weissenhorn W."/>
        </authorList>
    </citation>
    <scope>INTERACTION WITH EBOLA VIRUS PROTEIN VP40</scope>
</reference>
<reference key="12">
    <citation type="journal article" date="2003" name="J. Virol.">
        <title>PPPYVEPTAP motif is the late domain of human T-cell leukemia virus type 1 Gag and mediates its functional interaction with cellular proteins Nedd4 and Tsg101.</title>
        <authorList>
            <person name="Bouamr F."/>
            <person name="Melillo J.A."/>
            <person name="Wang M.Q."/>
            <person name="Nagashima K."/>
            <person name="de Los Santos M."/>
            <person name="Rein A."/>
            <person name="Goff S.P."/>
        </authorList>
    </citation>
    <scope>INTERACTION WITH HTLV-1 MATRIX PROTEIN P19</scope>
</reference>
<reference key="13">
    <citation type="journal article" date="2008" name="J. Biol. Chem.">
        <title>Nedd4 family-interacting protein 1 (Ndfip1) is required for the exosomal secretion of Nedd4 family proteins.</title>
        <authorList>
            <person name="Putz U."/>
            <person name="Howitt J."/>
            <person name="Lackovic J."/>
            <person name="Foot N."/>
            <person name="Kumar S."/>
            <person name="Silke J."/>
            <person name="Tan S.S."/>
        </authorList>
    </citation>
    <scope>SUBCELLULAR LOCATION</scope>
</reference>
<reference key="14">
    <citation type="journal article" date="2008" name="J. Virol.">
        <title>Herpes simplex virus type 2 UL56 interacts with the ubiquitin ligase Nedd4 and increases its ubiquitination.</title>
        <authorList>
            <person name="Ushijima Y."/>
            <person name="Koshizuka T."/>
            <person name="Goshima F."/>
            <person name="Kimura H."/>
            <person name="Nishiyama Y."/>
        </authorList>
    </citation>
    <scope>INTERACTION WITH HERPES SIMPLEX VIRUS 2 PROTEIN UL56</scope>
</reference>
<reference key="15">
    <citation type="journal article" date="2008" name="Proc. Natl. Acad. Sci. U.S.A.">
        <title>A quantitative atlas of mitotic phosphorylation.</title>
        <authorList>
            <person name="Dephoure N."/>
            <person name="Zhou C."/>
            <person name="Villen J."/>
            <person name="Beausoleil S.A."/>
            <person name="Bakalarski C.E."/>
            <person name="Elledge S.J."/>
            <person name="Gygi S.P."/>
        </authorList>
    </citation>
    <scope>PHOSPHORYLATION [LARGE SCALE ANALYSIS] AT SER-747</scope>
    <scope>IDENTIFICATION BY MASS SPECTROMETRY [LARGE SCALE ANALYSIS]</scope>
    <source>
        <tissue>Cervix carcinoma</tissue>
    </source>
</reference>
<reference key="16">
    <citation type="journal article" date="2008" name="Proc. Natl. Acad. Sci. U.S.A.">
        <title>ISG15 inhibits Ebola VP40 VLP budding in an L-domain-dependent manner by blocking Nedd4 ligase activity.</title>
        <authorList>
            <person name="Okumura A."/>
            <person name="Pitha P.M."/>
            <person name="Harty R.N."/>
        </authorList>
    </citation>
    <scope>FUNCTION (MICROBIAL INFECTION)</scope>
    <scope>INTERACTION WITH ISG15</scope>
</reference>
<reference key="17">
    <citation type="journal article" date="2008" name="Proc. Natl. Acad. Sci. U.S.A.">
        <title>The ubiquitin ligase Nedd4-1 is dispensable for the regulation of PTEN stability and localization.</title>
        <authorList>
            <person name="Fouladkou F."/>
            <person name="Landry T."/>
            <person name="Kawabe H."/>
            <person name="Neeb A."/>
            <person name="Lu C."/>
            <person name="Brose N."/>
            <person name="Stambolic V."/>
            <person name="Rotin D."/>
        </authorList>
    </citation>
    <scope>FUNCTION</scope>
    <scope>INTERACTION WITH PTEN</scope>
</reference>
<reference key="18">
    <citation type="journal article" date="2009" name="Proc. Natl. Acad. Sci. U.S.A.">
        <title>Distinct ubiquitin ligases act sequentially for RNA polymerase II polyubiquitylation.</title>
        <authorList>
            <person name="Harreman M."/>
            <person name="Taschner M."/>
            <person name="Sigurdsson S."/>
            <person name="Anindya R."/>
            <person name="Reid J."/>
            <person name="Somesh B."/>
            <person name="Kong S.E."/>
            <person name="Banks C.A."/>
            <person name="Conaway R.C."/>
            <person name="Conaway J.W."/>
            <person name="Svejstrup J.Q."/>
        </authorList>
    </citation>
    <scope>FUNCTION</scope>
    <scope>CATALYTIC ACTIVITY</scope>
</reference>
<reference key="19">
    <citation type="journal article" date="2009" name="Sci. Signal.">
        <title>Quantitative phosphoproteomic analysis of T cell receptor signaling reveals system-wide modulation of protein-protein interactions.</title>
        <authorList>
            <person name="Mayya V."/>
            <person name="Lundgren D.H."/>
            <person name="Hwang S.-I."/>
            <person name="Rezaul K."/>
            <person name="Wu L."/>
            <person name="Eng J.K."/>
            <person name="Rodionov V."/>
            <person name="Han D.K."/>
        </authorList>
    </citation>
    <scope>PHOSPHORYLATION [LARGE SCALE ANALYSIS] AT SER-747</scope>
    <scope>IDENTIFICATION BY MASS SPECTROMETRY [LARGE SCALE ANALYSIS]</scope>
    <source>
        <tissue>Leukemic T-cell</tissue>
    </source>
</reference>
<reference key="20">
    <citation type="journal article" date="2010" name="EMBO Rep.">
        <title>Arrestin domain-containing protein 3 recruits the NEDD4 E3 ligase to mediate ubiquitination of the beta2-adrenergic receptor.</title>
        <authorList>
            <person name="Nabhan J.F."/>
            <person name="Pan H."/>
            <person name="Lu Q."/>
        </authorList>
    </citation>
    <scope>INTERACTION WITH ARRDC3</scope>
</reference>
<reference key="21">
    <citation type="journal article" date="2010" name="Mol. Cell. Biol.">
        <title>HECT E3 ubiquitin ligase Nedd4-1 ubiquitinates ACK and regulates epidermal growth factor (EGF)-induced degradation of EGF receptor and ACK.</title>
        <authorList>
            <person name="Lin Q."/>
            <person name="Wang J."/>
            <person name="Childress C."/>
            <person name="Sudol M."/>
            <person name="Carey D.J."/>
            <person name="Yang W."/>
        </authorList>
    </citation>
    <scope>FUNCTION</scope>
    <scope>INTERACTION WITH TNK2</scope>
</reference>
<reference key="22">
    <citation type="journal article" date="2010" name="Neuron">
        <title>Regulation of Rap2A by the ubiquitin ligase Nedd4-1 controls neurite development.</title>
        <authorList>
            <person name="Kawabe H."/>
            <person name="Neeb A."/>
            <person name="Dimova K."/>
            <person name="Young S.M. Jr."/>
            <person name="Takeda M."/>
            <person name="Katsurabayashi S."/>
            <person name="Mitkovski M."/>
            <person name="Malakhova O.A."/>
            <person name="Zhang D.E."/>
            <person name="Umikawa M."/>
            <person name="Kariya K."/>
            <person name="Goebbels S."/>
            <person name="Nave K.A."/>
            <person name="Rosenmund C."/>
            <person name="Jahn O."/>
            <person name="Rhee J."/>
            <person name="Brose N."/>
        </authorList>
    </citation>
    <scope>INTERACTION WITH RAP2A AND TNIK</scope>
</reference>
<reference key="23">
    <citation type="journal article" date="2010" name="Sci. Signal.">
        <title>Quantitative phosphoproteomics reveals widespread full phosphorylation site occupancy during mitosis.</title>
        <authorList>
            <person name="Olsen J.V."/>
            <person name="Vermeulen M."/>
            <person name="Santamaria A."/>
            <person name="Kumar C."/>
            <person name="Miller M.L."/>
            <person name="Jensen L.J."/>
            <person name="Gnad F."/>
            <person name="Cox J."/>
            <person name="Jensen T.S."/>
            <person name="Nigg E.A."/>
            <person name="Brunak S."/>
            <person name="Mann M."/>
        </authorList>
    </citation>
    <scope>IDENTIFICATION BY MASS SPECTROMETRY [LARGE SCALE ANALYSIS]</scope>
    <source>
        <tissue>Cervix carcinoma</tissue>
    </source>
</reference>
<reference key="24">
    <citation type="journal article" date="2011" name="BMC Syst. Biol.">
        <title>Initial characterization of the human central proteome.</title>
        <authorList>
            <person name="Burkard T.R."/>
            <person name="Planyavsky M."/>
            <person name="Kaupe I."/>
            <person name="Breitwieser F.P."/>
            <person name="Buerckstuemmer T."/>
            <person name="Bennett K.L."/>
            <person name="Superti-Furga G."/>
            <person name="Colinge J."/>
        </authorList>
    </citation>
    <scope>IDENTIFICATION BY MASS SPECTROMETRY [LARGE SCALE ANALYSIS]</scope>
</reference>
<reference key="25">
    <citation type="journal article" date="2011" name="EMBO J.">
        <title>Nedd4-1 binds and ubiquitylates activated FGFR1 to control its endocytosis and function.</title>
        <authorList>
            <person name="Persaud A."/>
            <person name="Alberts P."/>
            <person name="Hayes M."/>
            <person name="Guettler S."/>
            <person name="Clarke I."/>
            <person name="Sicheri F."/>
            <person name="Dirks P."/>
            <person name="Ciruna B."/>
            <person name="Rotin D."/>
        </authorList>
    </citation>
    <scope>INTERACTION WITH FGFR1</scope>
    <scope>FUNCTION IN UBIQUITINATION OF FGFR1</scope>
</reference>
<reference key="26">
    <citation type="journal article" date="2011" name="J. Virol.">
        <title>Multiple interactions between the ESCRT machinery and arrestin-related proteins: implications for PPXY-dependent budding.</title>
        <authorList>
            <person name="Rauch S."/>
            <person name="Martin-Serrano J."/>
        </authorList>
    </citation>
    <scope>INTERACTION WITH ARRDC1; ARRDC2 AND ARRDC3</scope>
    <scope>DOMAIN</scope>
</reference>
<reference key="27">
    <citation type="journal article" date="2011" name="PLoS ONE">
        <title>A role for the ubiquitin ligase Nedd4 in membrane sorting of LAPTM4 proteins.</title>
        <authorList>
            <person name="Milkereit R."/>
            <person name="Rotin D."/>
        </authorList>
    </citation>
    <scope>INTERACTION WITH LAPTM4B</scope>
</reference>
<reference key="28">
    <citation type="journal article" date="2012" name="J. Cell Biol.">
        <title>MARCH2 promotes endocytosis and lysosomal sorting of carvedilol-bound beta(2)-adrenergic receptors.</title>
        <authorList>
            <person name="Han S.O."/>
            <person name="Xiao K."/>
            <person name="Kim J."/>
            <person name="Wu J.H."/>
            <person name="Wisler J.W."/>
            <person name="Nakamura N."/>
            <person name="Freedman N.J."/>
            <person name="Shenoy S.K."/>
        </authorList>
    </citation>
    <scope>INTERACTION WITH ADRB2</scope>
</reference>
<reference key="29">
    <citation type="journal article" date="2012" name="Mol. Cell. Proteomics">
        <title>Comparative large-scale characterisation of plant vs. mammal proteins reveals similar and idiosyncratic N-alpha acetylation features.</title>
        <authorList>
            <person name="Bienvenut W.V."/>
            <person name="Sumpton D."/>
            <person name="Martinez A."/>
            <person name="Lilla S."/>
            <person name="Espagne C."/>
            <person name="Meinnel T."/>
            <person name="Giglione C."/>
        </authorList>
    </citation>
    <scope>ACETYLATION [LARGE SCALE ANALYSIS] AT ALA-2 (ISOFORM 4)</scope>
    <scope>CLEAVAGE OF INITIATOR METHIONINE [LARGE SCALE ANALYSIS] (ISOFORM 4)</scope>
    <scope>IDENTIFICATION BY MASS SPECTROMETRY [LARGE SCALE ANALYSIS]</scope>
</reference>
<reference key="30">
    <citation type="journal article" date="2012" name="Oncogene">
        <title>Deubiquitination of EGFR by Cezanne-1 contributes to cancer progression.</title>
        <authorList>
            <person name="Pareja F."/>
            <person name="Ferraro D.A."/>
            <person name="Rubin C."/>
            <person name="Cohen-Dvashi H."/>
            <person name="Zhang F."/>
            <person name="Aulmann S."/>
            <person name="Ben-Chetrit N."/>
            <person name="Pines G."/>
            <person name="Navon R."/>
            <person name="Crosetto N."/>
            <person name="Kostler W."/>
            <person name="Carvalho S."/>
            <person name="Lavi S."/>
            <person name="Schmitt F."/>
            <person name="Dikic I."/>
            <person name="Yakhini Z."/>
            <person name="Sinn P."/>
            <person name="Mills G.B."/>
            <person name="Yarden Y."/>
        </authorList>
    </citation>
    <scope>INTERACTION WITH OTUD7B</scope>
</reference>
<reference key="31">
    <citation type="journal article" date="2013" name="J. Biol. Chem.">
        <title>Cellular localization and characterization of cytosolic binding partners for Gla domain-containing proteins PRRG4 and PRRG2.</title>
        <authorList>
            <person name="Yazicioglu M.N."/>
            <person name="Monaldini L."/>
            <person name="Chu K."/>
            <person name="Khazi F.R."/>
            <person name="Murphy S.L."/>
            <person name="Huang H."/>
            <person name="Margaritis P."/>
            <person name="High K.A."/>
        </authorList>
    </citation>
    <scope>INTERACTION WITH PRRG4</scope>
</reference>
<reference key="32">
    <citation type="journal article" date="2013" name="J. Proteome Res.">
        <title>Toward a comprehensive characterization of a human cancer cell phosphoproteome.</title>
        <authorList>
            <person name="Zhou H."/>
            <person name="Di Palma S."/>
            <person name="Preisinger C."/>
            <person name="Peng M."/>
            <person name="Polat A.N."/>
            <person name="Heck A.J."/>
            <person name="Mohammed S."/>
        </authorList>
    </citation>
    <scope>PHOSPHORYLATION [LARGE SCALE ANALYSIS] AT SER-742</scope>
    <scope>IDENTIFICATION BY MASS SPECTROMETRY [LARGE SCALE ANALYSIS]</scope>
    <source>
        <tissue>Cervix carcinoma</tissue>
        <tissue>Erythroleukemia</tissue>
    </source>
</reference>
<reference key="33">
    <citation type="journal article" date="2015" name="J. Biol. Chem.">
        <title>Nedd4 family interacting protein 1 (Ndfip1) is required for ubiquitination and nuclear trafficking of BRCA1-associated ATM activator 1 (BRAT1) during the DNA damage response.</title>
        <authorList>
            <person name="Low L.H."/>
            <person name="Chow Y.L."/>
            <person name="Li Y."/>
            <person name="Goh C.P."/>
            <person name="Putz U."/>
            <person name="Silke J."/>
            <person name="Ouchi T."/>
            <person name="Howitt J."/>
            <person name="Tan S.S."/>
        </authorList>
    </citation>
    <scope>FUNCTION IN UBIQUITINATION OF BRAT1</scope>
</reference>
<reference key="34">
    <citation type="journal article" date="2016" name="Biochemistry">
        <title>Regulation of Itch and Nedd4 E3 Ligase Activity and Degradation by LRAD3.</title>
        <authorList>
            <person name="Noyes N.C."/>
            <person name="Hampton B."/>
            <person name="Migliorini M."/>
            <person name="Strickland D.K."/>
        </authorList>
    </citation>
    <scope>INTERACTION WITH LDLRAD3</scope>
</reference>
<reference key="35">
    <citation type="journal article" date="2020" name="Cell Rep.">
        <title>Auto-ubiquitination of NEDD4-1 Recruits USP13 to Facilitate Autophagy through Deubiquitinating VPS34.</title>
        <authorList>
            <person name="Xie W."/>
            <person name="Jin S."/>
            <person name="Wu Y."/>
            <person name="Xian H."/>
            <person name="Tian S."/>
            <person name="Liu D.A."/>
            <person name="Guo Z."/>
            <person name="Cui J."/>
        </authorList>
    </citation>
    <scope>FUNCTION</scope>
    <scope>INTERACTION WITH USP13</scope>
    <scope>AUTO-UBIQUITINATION</scope>
</reference>
<reference key="36">
    <citation type="submission" date="2007-10" db="PDB data bank">
        <title>Crystal structure of the C2 domain of the E3 ubiquitin-protein ligase Nedd4.</title>
        <authorList>
            <consortium name="Structural genomics consortium (SGC)"/>
        </authorList>
    </citation>
    <scope>X-RAY CRYSTALLOGRAPHY (1.80 ANGSTROMS) OF 1-152 (ISOFORM 4)</scope>
</reference>
<reference key="37">
    <citation type="submission" date="2009-10" db="PDB data bank">
        <title>Human NEDD4 3rd WW domain complex with ebola Zaire virus matrix protein VP40 derived peptide.</title>
        <authorList>
            <person name="Iglesias-Bexiga M."/>
        </authorList>
    </citation>
    <scope>STRUCTURE BY NMR OF 834-878</scope>
    <scope>INTERACTION WITH EBOLA VIRUS MATRIX PROTEIN VP40</scope>
</reference>
<reference key="38">
    <citation type="submission" date="2009-10" db="PDB data bank">
        <title>Human NEDD4 3rd WW domain complex with human T-cell leukemia virus GAP-Pro polyprotein derived peptide.</title>
        <authorList>
            <person name="Iglesias-Bexiga M."/>
            <person name="Luque I."/>
            <person name="Macias M."/>
        </authorList>
    </citation>
    <scope>STRUCTURE BY NMR OF 834-878</scope>
</reference>
<reference key="39">
    <citation type="journal article" date="2011" name="EMBO Rep.">
        <title>Structure of the HECT:ubiquitin complex and its role in ubiquitin chain elongation.</title>
        <authorList>
            <person name="Maspero E."/>
            <person name="Mari S."/>
            <person name="Valentini E."/>
            <person name="Musacchio A."/>
            <person name="Fish A."/>
            <person name="Pasqualato S."/>
            <person name="Polo S."/>
        </authorList>
    </citation>
    <scope>X-RAY CRYSTALLOGRAPHY (2.50 ANGSTROMS) OF 938-1319 IN COMPLEX WITH UBIQUITIN</scope>
    <scope>FUNCTION</scope>
    <scope>CATALYTIC ACTIVITY</scope>
</reference>
<reference key="40">
    <citation type="journal article" date="2013" name="Biochim. Biophys. Acta">
        <title>Structure and dynamics of human Nedd4-1 WW3 in complex with the alphaENaC PY motif.</title>
        <authorList>
            <person name="Bobby R."/>
            <person name="Medini K."/>
            <person name="Neudecker P."/>
            <person name="Lee T.V."/>
            <person name="Brimble M.A."/>
            <person name="McDonald F.J."/>
            <person name="Lott J.S."/>
            <person name="Dingley A.J."/>
        </authorList>
    </citation>
    <scope>STRUCTURE BY NMR OF 838-877 IN COMPLEX WITH SCNN1A PEPTIDE</scope>
    <scope>DOMAIN</scope>
</reference>
<reference key="41">
    <citation type="journal article" date="2013" name="Nat. Struct. Mol. Biol.">
        <title>Structure of a ubiquitin-loaded HECT ligase reveals the molecular basis for catalytic priming.</title>
        <authorList>
            <person name="Maspero E."/>
            <person name="Valentini E."/>
            <person name="Mari S."/>
            <person name="Cecatiello V."/>
            <person name="Soffientini P."/>
            <person name="Pasqualato S."/>
            <person name="Polo S."/>
        </authorList>
    </citation>
    <scope>X-RAY CRYSTALLOGRAPHY (2.51 ANGSTROMS) OF 938-1319 IN COMPLEX WITH UBIQUITIN</scope>
    <scope>FUNCTION</scope>
    <scope>PATHWAY</scope>
</reference>
<reference key="42">
    <citation type="journal article" date="2014" name="J. Biol. Chem.">
        <title>Structural and biochemical basis for ubiquitin ligase recruitment by arrestin-related domain-containing protein-3 (ARRDC3).</title>
        <authorList>
            <person name="Qi S."/>
            <person name="O'Hayre M."/>
            <person name="Gutkind J.S."/>
            <person name="Hurley J.H."/>
        </authorList>
    </citation>
    <scope>X-RAY CRYSTALLOGRAPHY (1.10 ANGSTROMS) OF 841-874 IN COMPLEX WITH ARRDC3 PEPTIDE</scope>
    <scope>INTERACTION WITH ARRDC3</scope>
    <scope>MUTAGENESIS OF TRP-795; TRP-868 AND TRP-920</scope>
    <scope>DOMAIN</scope>
</reference>
<reference key="43">
    <citation type="journal article" date="2006" name="Science">
        <title>The consensus coding sequences of human breast and colorectal cancers.</title>
        <authorList>
            <person name="Sjoeblom T."/>
            <person name="Jones S."/>
            <person name="Wood L.D."/>
            <person name="Parsons D.W."/>
            <person name="Lin J."/>
            <person name="Barber T.D."/>
            <person name="Mandelker D."/>
            <person name="Leary R.J."/>
            <person name="Ptak J."/>
            <person name="Silliman N."/>
            <person name="Szabo S."/>
            <person name="Buckhaults P."/>
            <person name="Farrell C."/>
            <person name="Meeh P."/>
            <person name="Markowitz S.D."/>
            <person name="Willis J."/>
            <person name="Dawson D."/>
            <person name="Willson J.K.V."/>
            <person name="Gazdar A.F."/>
            <person name="Hartigan J."/>
            <person name="Wu L."/>
            <person name="Liu C."/>
            <person name="Parmigiani G."/>
            <person name="Park B.H."/>
            <person name="Bachman K.E."/>
            <person name="Papadopoulos N."/>
            <person name="Vogelstein B."/>
            <person name="Kinzler K.W."/>
            <person name="Velculescu V.E."/>
        </authorList>
    </citation>
    <scope>VARIANT [LARGE SCALE ANALYSIS] HIS-627</scope>
</reference>
<accession>P46934</accession>
<accession>A1KY35</accession>
<accession>A6ND72</accession>
<accession>A7MD29</accession>
<accession>B4E2R7</accession>
<accession>B7ZM59</accession>
<accession>B7ZM60</accession>
<accession>B9EGN5</accession>
<accession>D6RF89</accession>
<feature type="chain" id="PRO_0000120319" description="E3 ubiquitin-protein ligase NEDD4">
    <location>
        <begin position="1"/>
        <end position="1319"/>
    </location>
</feature>
<feature type="domain" description="WW 1" evidence="5">
    <location>
        <begin position="610"/>
        <end position="643"/>
    </location>
</feature>
<feature type="domain" description="WW 2" evidence="5">
    <location>
        <begin position="767"/>
        <end position="800"/>
    </location>
</feature>
<feature type="domain" description="WW 3" evidence="5">
    <location>
        <begin position="840"/>
        <end position="873"/>
    </location>
</feature>
<feature type="domain" description="WW 4" evidence="5">
    <location>
        <begin position="892"/>
        <end position="925"/>
    </location>
</feature>
<feature type="domain" description="HECT" evidence="4">
    <location>
        <begin position="984"/>
        <end position="1318"/>
    </location>
</feature>
<feature type="region of interest" description="Disordered" evidence="6">
    <location>
        <begin position="204"/>
        <end position="229"/>
    </location>
</feature>
<feature type="region of interest" description="Mediates interaction with TNIK" evidence="1">
    <location>
        <begin position="578"/>
        <end position="981"/>
    </location>
</feature>
<feature type="region of interest" description="Disordered" evidence="6">
    <location>
        <begin position="755"/>
        <end position="780"/>
    </location>
</feature>
<feature type="region of interest" description="Disordered" evidence="6">
    <location>
        <begin position="796"/>
        <end position="834"/>
    </location>
</feature>
<feature type="short sequence motif" description="Nuclear export signal" evidence="7">
    <location>
        <begin position="716"/>
        <end position="726"/>
    </location>
</feature>
<feature type="compositionally biased region" description="Polar residues" evidence="6">
    <location>
        <begin position="207"/>
        <end position="229"/>
    </location>
</feature>
<feature type="compositionally biased region" description="Polar residues" evidence="6">
    <location>
        <begin position="796"/>
        <end position="809"/>
    </location>
</feature>
<feature type="compositionally biased region" description="Low complexity" evidence="6">
    <location>
        <begin position="810"/>
        <end position="825"/>
    </location>
</feature>
<feature type="active site" description="Glycyl thioester intermediate" evidence="4">
    <location>
        <position position="1286"/>
    </location>
</feature>
<feature type="modified residue" description="Phosphoserine" evidence="3">
    <location>
        <position position="576"/>
    </location>
</feature>
<feature type="modified residue" description="Phosphothreonine" evidence="2">
    <location>
        <position position="648"/>
    </location>
</feature>
<feature type="modified residue" description="Phosphoserine" evidence="2">
    <location>
        <position position="670"/>
    </location>
</feature>
<feature type="modified residue" description="Phosphoserine" evidence="48">
    <location>
        <position position="742"/>
    </location>
</feature>
<feature type="modified residue" description="Phosphoserine" evidence="45 46">
    <location>
        <position position="747"/>
    </location>
</feature>
<feature type="cross-link" description="Glycyl lysine isopeptide (Lys-Gly) (interchain with G-Cter in ubiquitin)" evidence="34">
    <location>
        <position position="1279"/>
    </location>
</feature>
<feature type="splice variant" id="VSP_038256" description="In isoform 4." evidence="38 39 41 42">
    <location>
        <begin position="1"/>
        <end position="419"/>
    </location>
</feature>
<feature type="splice variant" id="VSP_038257" description="In isoform 4." evidence="38 39 41 42">
    <original>SACLPSSQNVDCQININGELERPHSQMNKNHGILRRSISLGGAYPNISCLSSLKHNCSKGGPSQLLIKFASGNEGKVDNLSRDSNRDCTNELSNSCK</original>
    <variation>MATCAVEVFGLLEDEENSRIVRVRVIAGIGLAKKDILGASDPYVRVTLYDPMNGVLTSVQTKTIKKSLNPKWNEEILFRVHPQQHRLLFEVFDENRL</variation>
    <location>
        <begin position="420"/>
        <end position="516"/>
    </location>
</feature>
<feature type="splice variant" id="VSP_038258" description="In isoform 3." evidence="40">
    <location>
        <begin position="517"/>
        <end position="588"/>
    </location>
</feature>
<feature type="splice variant" id="VSP_038259" description="In isoform 2." evidence="39">
    <location>
        <begin position="589"/>
        <end position="604"/>
    </location>
</feature>
<feature type="sequence variant" id="VAR_061985" description="In dbSNP:rs1912403.">
    <original>M</original>
    <variation>V</variation>
    <location>
        <position position="33"/>
    </location>
</feature>
<feature type="sequence variant" id="VAR_036472" description="In a breast cancer sample; somatic mutation." evidence="14">
    <original>Y</original>
    <variation>H</variation>
    <location>
        <position position="627"/>
    </location>
</feature>
<feature type="sequence variant" id="VAR_047909" description="In dbSNP:rs2303580." evidence="11 12 13 35 36">
    <original>R</original>
    <variation>Q</variation>
    <location>
        <position position="679"/>
    </location>
</feature>
<feature type="sequence variant" id="VAR_047910" description="In dbSNP:rs2303579." evidence="11 12 13 35 36">
    <original>N</original>
    <variation>S</variation>
    <location>
        <position position="698"/>
    </location>
</feature>
<feature type="mutagenesis site" description="Increased nuclear localization." evidence="7">
    <original>LTI</original>
    <variation>ATA</variation>
    <location>
        <begin position="724"/>
        <end position="726"/>
    </location>
</feature>
<feature type="mutagenesis site" description="Abolishes interaction with ARRDC3; when associated with A-868 and A-920." evidence="32">
    <original>W</original>
    <variation>A</variation>
    <location>
        <position position="795"/>
    </location>
</feature>
<feature type="mutagenesis site" description="Abolishes interaction with ARRDC3; when associated with A-795 and A-920." evidence="32">
    <original>W</original>
    <variation>A</variation>
    <location>
        <position position="868"/>
    </location>
</feature>
<feature type="mutagenesis site" description="Abolishes interaction with ARRDC3; when associated with A-795 and A-868." evidence="32">
    <original>W</original>
    <variation>A</variation>
    <location>
        <position position="920"/>
    </location>
</feature>
<feature type="mutagenesis site" description="Abolishes ubiquitination of DAZAP2." evidence="7">
    <original>C</original>
    <variation>A</variation>
    <location>
        <position position="1286"/>
    </location>
</feature>
<feature type="sequence conflict" description="In Ref. 5; AL832063." evidence="43" ref="5">
    <original>A</original>
    <variation>T</variation>
    <location>
        <position position="59"/>
    </location>
</feature>
<feature type="sequence conflict" description="In Ref. 5; AL832063." evidence="43" ref="5">
    <original>N</original>
    <variation>H</variation>
    <location>
        <position position="407"/>
    </location>
</feature>
<feature type="sequence conflict" description="In Ref. 4; AAT52215 and 8; AAI44285." evidence="43" ref="4 8">
    <original>Q</original>
    <variation>R</variation>
    <location>
        <position position="620"/>
    </location>
</feature>
<feature type="sequence conflict" description="In Ref. 8; AAI36606/AAI44285." evidence="43" ref="8">
    <original>T</original>
    <variation>I</variation>
    <location>
        <position position="863"/>
    </location>
</feature>
<feature type="sequence conflict" description="In Ref. 3; BAG65229." evidence="43" ref="3">
    <original>L</original>
    <variation>P</variation>
    <location>
        <position position="1199"/>
    </location>
</feature>
<feature type="sequence conflict" description="In Ref. 5; AL832063." evidence="43" ref="5">
    <original>S</original>
    <variation>L</variation>
    <location>
        <position position="1268"/>
    </location>
</feature>
<feature type="strand" evidence="52">
    <location>
        <begin position="520"/>
        <end position="528"/>
    </location>
</feature>
<feature type="strand" evidence="52">
    <location>
        <begin position="546"/>
        <end position="549"/>
    </location>
</feature>
<feature type="strand" evidence="52">
    <location>
        <begin position="561"/>
        <end position="569"/>
    </location>
</feature>
<feature type="strand" evidence="54">
    <location>
        <begin position="841"/>
        <end position="843"/>
    </location>
</feature>
<feature type="strand" evidence="53">
    <location>
        <begin position="846"/>
        <end position="850"/>
    </location>
</feature>
<feature type="turn" evidence="49">
    <location>
        <begin position="852"/>
        <end position="854"/>
    </location>
</feature>
<feature type="strand" evidence="53">
    <location>
        <begin position="856"/>
        <end position="860"/>
    </location>
</feature>
<feature type="turn" evidence="53">
    <location>
        <begin position="861"/>
        <end position="864"/>
    </location>
</feature>
<feature type="strand" evidence="53">
    <location>
        <begin position="865"/>
        <end position="869"/>
    </location>
</feature>
<feature type="turn" evidence="49">
    <location>
        <begin position="871"/>
        <end position="873"/>
    </location>
</feature>
<feature type="helix" evidence="55">
    <location>
        <begin position="941"/>
        <end position="951"/>
    </location>
</feature>
<feature type="strand" evidence="55">
    <location>
        <begin position="956"/>
        <end position="958"/>
    </location>
</feature>
<feature type="strand" evidence="55">
    <location>
        <begin position="960"/>
        <end position="966"/>
    </location>
</feature>
<feature type="helix" evidence="55">
    <location>
        <begin position="968"/>
        <end position="970"/>
    </location>
</feature>
<feature type="helix" evidence="55">
    <location>
        <begin position="971"/>
        <end position="979"/>
    </location>
</feature>
<feature type="helix" evidence="55">
    <location>
        <begin position="985"/>
        <end position="989"/>
    </location>
</feature>
<feature type="strand" evidence="55">
    <location>
        <begin position="990"/>
        <end position="996"/>
    </location>
</feature>
<feature type="helix" evidence="55">
    <location>
        <begin position="1004"/>
        <end position="1019"/>
    </location>
</feature>
<feature type="helix" evidence="55">
    <location>
        <begin position="1022"/>
        <end position="1024"/>
    </location>
</feature>
<feature type="strand" evidence="55">
    <location>
        <begin position="1025"/>
        <end position="1031"/>
    </location>
</feature>
<feature type="strand" evidence="55">
    <location>
        <begin position="1037"/>
        <end position="1039"/>
    </location>
</feature>
<feature type="helix" evidence="55">
    <location>
        <begin position="1043"/>
        <end position="1046"/>
    </location>
</feature>
<feature type="helix" evidence="55">
    <location>
        <begin position="1050"/>
        <end position="1067"/>
    </location>
</feature>
<feature type="strand" evidence="50">
    <location>
        <begin position="1071"/>
        <end position="1073"/>
    </location>
</feature>
<feature type="helix" evidence="55">
    <location>
        <begin position="1077"/>
        <end position="1083"/>
    </location>
</feature>
<feature type="helix" evidence="55">
    <location>
        <begin position="1091"/>
        <end position="1096"/>
    </location>
</feature>
<feature type="helix" evidence="55">
    <location>
        <begin position="1098"/>
        <end position="1109"/>
    </location>
</feature>
<feature type="helix" evidence="55">
    <location>
        <begin position="1113"/>
        <end position="1115"/>
    </location>
</feature>
<feature type="strand" evidence="55">
    <location>
        <begin position="1118"/>
        <end position="1125"/>
    </location>
</feature>
<feature type="strand" evidence="55">
    <location>
        <begin position="1128"/>
        <end position="1135"/>
    </location>
</feature>
<feature type="helix" evidence="55">
    <location>
        <begin position="1138"/>
        <end position="1140"/>
    </location>
</feature>
<feature type="turn" evidence="55">
    <location>
        <begin position="1145"/>
        <end position="1147"/>
    </location>
</feature>
<feature type="helix" evidence="55">
    <location>
        <begin position="1148"/>
        <end position="1160"/>
    </location>
</feature>
<feature type="helix" evidence="55">
    <location>
        <begin position="1162"/>
        <end position="1164"/>
    </location>
</feature>
<feature type="helix" evidence="55">
    <location>
        <begin position="1165"/>
        <end position="1178"/>
    </location>
</feature>
<feature type="helix" evidence="55">
    <location>
        <begin position="1181"/>
        <end position="1184"/>
    </location>
</feature>
<feature type="helix" evidence="55">
    <location>
        <begin position="1189"/>
        <end position="1196"/>
    </location>
</feature>
<feature type="helix" evidence="55">
    <location>
        <begin position="1204"/>
        <end position="1209"/>
    </location>
</feature>
<feature type="strand" evidence="55">
    <location>
        <begin position="1212"/>
        <end position="1214"/>
    </location>
</feature>
<feature type="strand" evidence="51">
    <location>
        <begin position="1219"/>
        <end position="1221"/>
    </location>
</feature>
<feature type="helix" evidence="55">
    <location>
        <begin position="1222"/>
        <end position="1233"/>
    </location>
</feature>
<feature type="helix" evidence="55">
    <location>
        <begin position="1236"/>
        <end position="1247"/>
    </location>
</feature>
<feature type="strand" evidence="55">
    <location>
        <begin position="1248"/>
        <end position="1250"/>
    </location>
</feature>
<feature type="helix" evidence="55">
    <location>
        <begin position="1257"/>
        <end position="1259"/>
    </location>
</feature>
<feature type="strand" evidence="55">
    <location>
        <begin position="1263"/>
        <end position="1266"/>
    </location>
</feature>
<feature type="strand" evidence="55">
    <location>
        <begin position="1270"/>
        <end position="1272"/>
    </location>
</feature>
<feature type="strand" evidence="55">
    <location>
        <begin position="1282"/>
        <end position="1284"/>
    </location>
</feature>
<feature type="helix" evidence="55">
    <location>
        <begin position="1285"/>
        <end position="1287"/>
    </location>
</feature>
<feature type="strand" evidence="55">
    <location>
        <begin position="1289"/>
        <end position="1291"/>
    </location>
</feature>
<feature type="helix" evidence="55">
    <location>
        <begin position="1298"/>
        <end position="1309"/>
    </location>
</feature>
<feature type="initiator methionine" description="Removed" evidence="47">
    <location sequence="P46934-4">
        <position position="1"/>
    </location>
</feature>
<feature type="modified residue" description="N-acetylalanine" evidence="47">
    <location sequence="P46934-4">
        <position position="2"/>
    </location>
</feature>
<proteinExistence type="evidence at protein level"/>
<keyword id="KW-0002">3D-structure</keyword>
<keyword id="KW-0007">Acetylation</keyword>
<keyword id="KW-0025">Alternative splicing</keyword>
<keyword id="KW-1003">Cell membrane</keyword>
<keyword id="KW-0963">Cytoplasm</keyword>
<keyword id="KW-0945">Host-virus interaction</keyword>
<keyword id="KW-1017">Isopeptide bond</keyword>
<keyword id="KW-0472">Membrane</keyword>
<keyword id="KW-0524">Neurogenesis</keyword>
<keyword id="KW-0539">Nucleus</keyword>
<keyword id="KW-0597">Phosphoprotein</keyword>
<keyword id="KW-1267">Proteomics identification</keyword>
<keyword id="KW-1185">Reference proteome</keyword>
<keyword id="KW-0677">Repeat</keyword>
<keyword id="KW-0808">Transferase</keyword>
<keyword id="KW-0832">Ubl conjugation</keyword>
<keyword id="KW-0833">Ubl conjugation pathway</keyword>